<name>PINK1_HUMAN</name>
<sequence>MAVRQALGRGLQLGRALLLRFTGKPGRAYGLGRPGPAAGCVRGERPGWAAGPGAEPRRVGLGLPNRLRFFRQSVAGLAARLQRQFVVRAWGCAGPCGRAVFLAFGLGLGLIEEKQAESRRAVSACQEIQAIFTQKSKPGPDPLDTRRLQGFRLEEYLIGQSIGKGCSAAVYEATMPTLPQNLEVTKSTGLLPGRGPGTSAPGEGQERAPGAPAFPLAIKMMWNISAGSSSEAILNTMSQELVPASRVALAGEYGAVTYRKSKRGPKQLAPHPNIIRVLRAFTSSVPLLPGALVDYPDVLPSRLHPEGLGHGRTLFLVMKNYPCTLRQYLCVNTPSPRLAAMMLLQLLEGVDHLVQQGIAHRDLKSDNILVELDPDGCPWLVIADFGCCLADESIGLQLPFSSWYVDRGGNGCLMAPEVSTARPGPRAVIDYSKADAWAVGAIAYEIFGLVNPFYGQGKAHLESRSYQEAQLPALPESVPPDVRQLVRALLQREASKRPSARVAANVLHLSLWGEHILALKNLKLDKMVGWLLQQSAATLLANRLTEKCCVETKMKMLFLANLECETLCQAALLLCSWRAAL</sequence>
<accession>Q9BXM7</accession>
<accession>Q8N6T9</accession>
<accession>Q8NBU3</accession>
<accession>Q96DE4</accession>
<keyword id="KW-0002">3D-structure</keyword>
<keyword id="KW-0025">Alternative splicing</keyword>
<keyword id="KW-0067">ATP-binding</keyword>
<keyword id="KW-0072">Autophagy</keyword>
<keyword id="KW-0963">Cytoplasm</keyword>
<keyword id="KW-0225">Disease variant</keyword>
<keyword id="KW-0418">Kinase</keyword>
<keyword id="KW-0460">Magnesium</keyword>
<keyword id="KW-0472">Membrane</keyword>
<keyword id="KW-0479">Metal-binding</keyword>
<keyword id="KW-0496">Mitochondrion</keyword>
<keyword id="KW-0999">Mitochondrion inner membrane</keyword>
<keyword id="KW-1000">Mitochondrion outer membrane</keyword>
<keyword id="KW-0523">Neurodegeneration</keyword>
<keyword id="KW-0547">Nucleotide-binding</keyword>
<keyword id="KW-0907">Parkinson disease</keyword>
<keyword id="KW-0908">Parkinsonism</keyword>
<keyword id="KW-0597">Phosphoprotein</keyword>
<keyword id="KW-1274">Primary mitochondrial disease</keyword>
<keyword id="KW-1267">Proteomics identification</keyword>
<keyword id="KW-1185">Reference proteome</keyword>
<keyword id="KW-0723">Serine/threonine-protein kinase</keyword>
<keyword id="KW-0808">Transferase</keyword>
<keyword id="KW-0809">Transit peptide</keyword>
<keyword id="KW-0812">Transmembrane</keyword>
<keyword id="KW-1133">Transmembrane helix</keyword>
<comment type="function">
    <text evidence="2 8 10 31 34 35 37 38 39 40 43 46 47 48 50 51 52 53 54 55 56 57 60 61">Serine/threonine-protein kinase which acts as a sensor of mitochondrial damage and protects against mitochondrial dysfunction during cellular stress. It phosphorylates mitochondrial proteins to coordinate mitochondrial quality control mechanisms that remove and replace dysfunctional mitochondrial components (PubMed:14607334, PubMed:15087508, PubMed:18443288, PubMed:18957282, PubMed:19229105, PubMed:19966284, PubMed:20404107, PubMed:20547144, PubMed:20798600, PubMed:22396657, PubMed:23620051, PubMed:23754282, PubMed:23933751, PubMed:24660806, PubMed:24751536, PubMed:24784582, PubMed:24896179, PubMed:24898855, PubMed:25527291, PubMed:32484300). Depending on the severity of mitochondrial damage, activity ranges from preventing apoptosis and stimulating mitochondrial biogenesis to eliminating severely damaged mitochondria via PINK1-PRKN-dependent mitophagy (PubMed:14607334, PubMed:15087508, PubMed:18443288, PubMed:19966284, PubMed:20404107, PubMed:20798600, PubMed:22396657, PubMed:23620051, PubMed:23933751, PubMed:24898855, PubMed:32047033, PubMed:32484300). When cellular stress results in irreversible mitochondrial damage, PINK1 accumulates at the outer mitochondrial membrane (OMM) where it phosphorylates pre-existing polyubiquitin chains at 'Ser-65', recruits PRKN from the cytosol to the OMM and activates PRKN by phosphorylation at 'Ser-65'; activated PRKN then ubiquinates VDAC1 and other OMM proteins to initiate mitophagy (PubMed:14607334, PubMed:15087508, PubMed:19966284, PubMed:20404107, PubMed:20798600, PubMed:23754282, PubMed:23933751, PubMed:24660806, PubMed:24751536, PubMed:24784582, PubMed:25474007, PubMed:25527291, PubMed:32047033). The PINK1-PRKN pathway also promotes fission of damaged mitochondria through phosphorylation and PRKN-dependent degradation of mitochondrial proteins involved in fission such as MFN2 (PubMed:18443288, PubMed:23620051, PubMed:24898855). This prevents the refusion of unhealthy mitochondria with the mitochondrial network or initiates mitochondrial fragmentation facilitating their later engulfment by autophagosomes (PubMed:18443288, PubMed:23620051). Also promotes mitochondrial fission independently of PRKN and ATG7-mediated mitophagy, via the phosphorylation and activation of DNM1L (PubMed:18443288, PubMed:32484300). Regulates motility of damaged mitochondria by promoting the ubiquitination and subsequent degradation of MIRO1 and MIRO2; in motor neurons, this likely inhibits mitochondrial intracellular anterograde transport along the axons which probably increases the chance of the mitochondria undergoing mitophagy in the soma (PubMed:22396657). Required for ubiquinone reduction by mitochondrial complex I by mediating phosphorylation of complex I subunit NDUFA10 (By similarity). Phosphorylates LETM1, positively regulating its mitochondrial calcium transport activity (PubMed:29123128).</text>
</comment>
<comment type="catalytic activity">
    <reaction evidence="34 50 51 52 61">
        <text>L-seryl-[protein] + ATP = O-phospho-L-seryl-[protein] + ADP + H(+)</text>
        <dbReference type="Rhea" id="RHEA:17989"/>
        <dbReference type="Rhea" id="RHEA-COMP:9863"/>
        <dbReference type="Rhea" id="RHEA-COMP:11604"/>
        <dbReference type="ChEBI" id="CHEBI:15378"/>
        <dbReference type="ChEBI" id="CHEBI:29999"/>
        <dbReference type="ChEBI" id="CHEBI:30616"/>
        <dbReference type="ChEBI" id="CHEBI:83421"/>
        <dbReference type="ChEBI" id="CHEBI:456216"/>
        <dbReference type="EC" id="2.7.11.1"/>
    </reaction>
</comment>
<comment type="catalytic activity">
    <reaction evidence="34 50 51 52 57 61">
        <text>L-threonyl-[protein] + ATP = O-phospho-L-threonyl-[protein] + ADP + H(+)</text>
        <dbReference type="Rhea" id="RHEA:46608"/>
        <dbReference type="Rhea" id="RHEA-COMP:11060"/>
        <dbReference type="Rhea" id="RHEA-COMP:11605"/>
        <dbReference type="ChEBI" id="CHEBI:15378"/>
        <dbReference type="ChEBI" id="CHEBI:30013"/>
        <dbReference type="ChEBI" id="CHEBI:30616"/>
        <dbReference type="ChEBI" id="CHEBI:61977"/>
        <dbReference type="ChEBI" id="CHEBI:456216"/>
        <dbReference type="EC" id="2.7.11.1"/>
    </reaction>
</comment>
<comment type="cofactor">
    <cofactor>
        <name>Mg(2+)</name>
        <dbReference type="ChEBI" id="CHEBI:18420"/>
    </cofactor>
</comment>
<comment type="subunit">
    <text evidence="35 37 40 48 59 62 63 64 65">Upon mitochondrial depolarization, it forms a supercomplex with TOM and TIM23 complexes (PubMed:38416681). PINK1-TOM-TIM23 supercomplex formation requires PINK1 interaction with TOMM20 and TOMM70 and is critical for PINK1 stabilization at the outer mitochondrial membrane, kinase activation and downstream mitophagy (PubMed:35391620, PubMed:38416681, PubMed:38848361). Upon mitochondrial depolarization, interacts with TIMM23; the interaction is required for PINK1 accumulation at the outer mitochondrial membrane, kinase activation by autophosphorylation and PRKN recruitement to mitochondria (PubMed:35391620, PubMed:37160114, PubMed:38416681, PubMed:38848361). Interacts with PRKN (PubMed:19966284, PubMed:20798600). Interacts with FBXO7 (PubMed:23933751). Forms a complex with PRKN and PARK7 (PubMed:19229105). Interacts with NENF (PubMed:31536960).</text>
</comment>
<comment type="interaction">
    <interactant intactId="EBI-2846068">
        <id>Q9BXM7</id>
    </interactant>
    <interactant intactId="EBI-11529439">
        <id>P63010-2</id>
        <label>AP2B1</label>
    </interactant>
    <organismsDiffer>false</organismsDiffer>
    <experiments>3</experiments>
</comment>
<comment type="interaction">
    <interactant intactId="EBI-2846068">
        <id>Q9BXM7</id>
    </interactant>
    <interactant intactId="EBI-77613">
        <id>P05067</id>
        <label>APP</label>
    </interactant>
    <organismsDiffer>false</organismsDiffer>
    <experiments>3</experiments>
</comment>
<comment type="interaction">
    <interactant intactId="EBI-2846068">
        <id>Q9BXM7</id>
    </interactant>
    <interactant intactId="EBI-518823">
        <id>O15392</id>
        <label>BIRC5</label>
    </interactant>
    <organismsDiffer>false</organismsDiffer>
    <experiments>3</experiments>
</comment>
<comment type="interaction">
    <interactant intactId="EBI-2846068">
        <id>Q9BXM7</id>
    </interactant>
    <interactant intactId="EBI-1161222">
        <id>Q9Y3I1</id>
        <label>FBXO7</label>
    </interactant>
    <organismsDiffer>false</organismsDiffer>
    <experiments>8</experiments>
</comment>
<comment type="interaction">
    <interactant intactId="EBI-2846068">
        <id>Q9BXM7</id>
    </interactant>
    <interactant intactId="EBI-9102965">
        <id>Q9Y3I1-1</id>
        <label>FBXO7</label>
    </interactant>
    <organismsDiffer>false</organismsDiffer>
    <experiments>2</experiments>
</comment>
<comment type="interaction">
    <interactant intactId="EBI-2846068">
        <id>Q9BXM7</id>
    </interactant>
    <interactant intactId="EBI-396453">
        <id>Q9UHY8</id>
        <label>FEZ2</label>
    </interactant>
    <organismsDiffer>false</organismsDiffer>
    <experiments>3</experiments>
</comment>
<comment type="interaction">
    <interactant intactId="EBI-2846068">
        <id>Q9BXM7</id>
    </interactant>
    <interactant intactId="EBI-352572">
        <id>P08238</id>
        <label>HSP90AB1</label>
    </interactant>
    <organismsDiffer>false</organismsDiffer>
    <experiments>3</experiments>
</comment>
<comment type="interaction">
    <interactant intactId="EBI-2846068">
        <id>Q9BXM7</id>
    </interactant>
    <interactant intactId="EBI-466029">
        <id>P42858</id>
        <label>HTT</label>
    </interactant>
    <organismsDiffer>false</organismsDiffer>
    <experiments>9</experiments>
</comment>
<comment type="interaction">
    <interactant intactId="EBI-2846068">
        <id>Q9BXM7</id>
    </interactant>
    <interactant intactId="EBI-21911304">
        <id>Q6DN90-2</id>
        <label>IQSEC1</label>
    </interactant>
    <organismsDiffer>false</organismsDiffer>
    <experiments>3</experiments>
</comment>
<comment type="interaction">
    <interactant intactId="EBI-2846068">
        <id>Q9BXM7</id>
    </interactant>
    <interactant intactId="EBI-1108377">
        <id>Q9BYZ2</id>
        <label>LDHAL6B</label>
    </interactant>
    <organismsDiffer>false</organismsDiffer>
    <experiments>3</experiments>
</comment>
<comment type="interaction">
    <interactant intactId="EBI-2846068">
        <id>Q9BXM7</id>
    </interactant>
    <interactant intactId="EBI-373144">
        <id>Q9GZQ8</id>
        <label>MAP1LC3B</label>
    </interactant>
    <organismsDiffer>false</organismsDiffer>
    <experiments>3</experiments>
</comment>
<comment type="interaction">
    <interactant intactId="EBI-2846068">
        <id>Q9BXM7</id>
    </interactant>
    <interactant intactId="EBI-716063">
        <id>Q13113</id>
        <label>PDZK1IP1</label>
    </interactant>
    <organismsDiffer>false</organismsDiffer>
    <experiments>3</experiments>
</comment>
<comment type="interaction">
    <interactant intactId="EBI-2846068">
        <id>Q9BXM7</id>
    </interactant>
    <interactant intactId="EBI-712238">
        <id>P00491</id>
        <label>PNP</label>
    </interactant>
    <organismsDiffer>false</organismsDiffer>
    <experiments>3</experiments>
</comment>
<comment type="interaction">
    <interactant intactId="EBI-2846068">
        <id>Q9BXM7</id>
    </interactant>
    <interactant intactId="EBI-716346">
        <id>O60260</id>
        <label>PRKN</label>
    </interactant>
    <organismsDiffer>false</organismsDiffer>
    <experiments>7</experiments>
</comment>
<comment type="interaction">
    <interactant intactId="EBI-2846068">
        <id>Q9BXM7</id>
    </interactant>
    <interactant intactId="EBI-1396430">
        <id>Q8IXI2</id>
        <label>RHOT1</label>
    </interactant>
    <organismsDiffer>false</organismsDiffer>
    <experiments>3</experiments>
</comment>
<comment type="interaction">
    <interactant intactId="EBI-2846068">
        <id>Q9BXM7</id>
    </interactant>
    <interactant intactId="EBI-3942425">
        <id>Q8WXH5</id>
        <label>SOCS4</label>
    </interactant>
    <organismsDiffer>false</organismsDiffer>
    <experiments>3</experiments>
</comment>
<comment type="interaction">
    <interactant intactId="EBI-2846068">
        <id>Q9BXM7</id>
    </interactant>
    <interactant intactId="EBI-11959123">
        <id>Q99932-2</id>
        <label>SPAG8</label>
    </interactant>
    <organismsDiffer>false</organismsDiffer>
    <experiments>3</experiments>
</comment>
<comment type="interaction">
    <interactant intactId="EBI-2846068">
        <id>Q9BXM7</id>
    </interactant>
    <interactant intactId="EBI-12151837">
        <id>P28347-2</id>
        <label>TEAD1</label>
    </interactant>
    <organismsDiffer>false</organismsDiffer>
    <experiments>3</experiments>
</comment>
<comment type="interaction">
    <interactant intactId="EBI-2846068">
        <id>Q9BXM7</id>
    </interactant>
    <interactant intactId="EBI-11141397">
        <id>Q9UBQ0-2</id>
        <label>VPS29</label>
    </interactant>
    <organismsDiffer>false</organismsDiffer>
    <experiments>3</experiments>
</comment>
<comment type="interaction">
    <interactant intactId="EBI-2846068">
        <id>Q9BXM7</id>
    </interactant>
    <interactant intactId="EBI-2813661">
        <id>Q8N895</id>
        <label>ZNF366</label>
    </interactant>
    <organismsDiffer>false</organismsDiffer>
    <experiments>3</experiments>
</comment>
<comment type="interaction">
    <interactant intactId="EBI-15643376">
        <id>Q9BXM7-1</id>
    </interactant>
    <interactant intactId="EBI-716346">
        <id>O60260</id>
        <label>PRKN</label>
    </interactant>
    <organismsDiffer>false</organismsDiffer>
    <experiments>2</experiments>
</comment>
<comment type="interaction">
    <interactant intactId="EBI-15643376">
        <id>Q9BXM7-1</id>
    </interactant>
    <interactant intactId="EBI-1055869">
        <id>Q12931</id>
        <label>TRAP1</label>
    </interactant>
    <organismsDiffer>false</organismsDiffer>
    <experiments>4</experiments>
</comment>
<comment type="subcellular location">
    <subcellularLocation>
        <location evidence="10 24 32 34 35 40 48 59">Mitochondrion outer membrane</location>
        <topology evidence="3">Single-pass membrane protein</topology>
    </subcellularLocation>
    <subcellularLocation>
        <location evidence="2">Mitochondrion inner membrane</location>
        <topology evidence="3">Single-pass membrane protein</topology>
    </subcellularLocation>
    <subcellularLocation>
        <location evidence="34 35 40 42">Cytoplasm</location>
        <location evidence="34 35 40 42">Cytosol</location>
    </subcellularLocation>
    <text evidence="34 35">Localizes mostly in mitochondrion and the two smaller proteolytic processed fragments localize mainly in cytosol (PubMed:19229105). Upon mitochondrial membrane depolarization following damage, PINK1 import into the mitochondria is arrested, which induces its accumulation in the outer mitochondrial membrane, where it acquires kinase activity (PubMed:18957282).</text>
</comment>
<comment type="alternative products">
    <event type="alternative splicing"/>
    <isoform>
        <id>Q9BXM7-1</id>
        <name evidence="8">1</name>
        <sequence type="displayed"/>
    </isoform>
    <isoform>
        <id>Q9BXM7-2</id>
        <name evidence="67">2</name>
        <sequence type="described" ref="VSP_050754 VSP_050755"/>
    </isoform>
</comment>
<comment type="tissue specificity">
    <text evidence="7">Highly expressed in heart, skeletal muscle and testis, and at lower levels in brain, placenta, liver, kidney, pancreas, prostate, ovary and small intestine. Present in the embryonic testis from an early stage of development.</text>
</comment>
<comment type="PTM">
    <text evidence="35 38 42 58">Proteolytically cleaved (PubMed:19229105, PubMed:22354088, PubMed:30733118). In healthy cells, the precursor is continuously imported into the inner mitochondrial membrane (IMM), where it is proteolytically cleaved by mitochondrial-processing peptidase (MPP) and then undergoes further proteolytic cleavage by PARL or AFG3L2 to give rise to the 52 kDa short form (PubMed:19229105, PubMed:22354088). The 52 kDa short form is then released into the cytosol where it rapidly undergoes proteasome-dependent degradation (PubMed:20404107). In unhealthy cells, when cellular stress conditions lead to the loss of mitochondrial membrane potential, mitochondrial import is impaired leading to the precursor accumulating on the outer mitochondrial membrane (OMM) (PubMed:20404107, PubMed:30733118). If accumulation at the OMM fails and it is imported into the depolarized mitochondria, it undergoes cleavage by the IMM protease OMA1, promoting its subsequent degradation by the proteasome (PubMed:30733118).</text>
</comment>
<comment type="PTM">
    <text evidence="34 38 44">Autophosphorylated (PubMed:18957282, PubMed:20404107, PubMed:22910362). Loss of mitochondrial membrane potential results in the precursor accumulating on the outer mitochondrial membrane (OMM) where it is activated by autophosphorylation (PubMed:18957282, PubMed:20404107, PubMed:22910362). Autophosphorylation at Ser-228 and Ser-402 is sufficient and essential for selective recruitment of PRKN to depolarized mitochondria, via PINK1-dependent phosphorylation of ubiquitin and maybe PRKN (PubMed:18957282, PubMed:22910362).</text>
</comment>
<comment type="disease" evidence="10 11 12 13 14 15 16 17 18 19 20 21 22 23 25 27 29 33 35 36 39 40 41 43 45 49 52">
    <disease id="DI-01239">
        <name>Parkinson disease 6</name>
        <acronym>PARK6</acronym>
        <description>An early-onset form of Parkinson disease, a neurodegenerative disorder characterized by parkinsonian signs such as rigidity, resting tremor and bradykinesia. A subset of patients manifest additional symptoms including hyperreflexia, autonomic instability, dementia and psychiatric disturbances. Symptoms show diurnal fluctuation and can improve after sleep. PARK6 pathogenesis involves respiratory complex I deficiency causing mitochondrial depolarization and dysfunction. Inheritance is autosomal recessive.</description>
        <dbReference type="MIM" id="605909"/>
    </disease>
    <text>The disease is caused by variants affecting the gene represented in this entry.</text>
</comment>
<comment type="similarity">
    <text evidence="4">Belongs to the protein kinase superfamily. Ser/Thr protein kinase family.</text>
</comment>
<reference evidence="67" key="1">
    <citation type="journal article" date="2001" name="Oncogene">
        <title>Growth-suppressive effects of BPOZ and EGR2, two genes involved in the PTEN signaling pathway.</title>
        <authorList>
            <person name="Unoki M."/>
            <person name="Nakamura Y."/>
        </authorList>
    </citation>
    <scope>NUCLEOTIDE SEQUENCE [MRNA] (ISOFORM 1)</scope>
    <scope>TISSUE SPECIFICITY</scope>
    <source>
        <tissue evidence="7">Endometrium</tissue>
    </source>
</reference>
<reference evidence="67" key="2">
    <citation type="journal article" date="2003" name="Cancer Lett.">
        <title>BRPK, a novel protein kinase showing increased expression in mouse cancer cell lines with higher metastatic potential.</title>
        <authorList>
            <person name="Nakajima A."/>
            <person name="Kataoka K."/>
            <person name="Hong M."/>
            <person name="Sakaguchi M."/>
            <person name="Huh N.-H."/>
        </authorList>
    </citation>
    <scope>NUCLEOTIDE SEQUENCE [MRNA] (ISOFORM 1)</scope>
    <scope>FUNCTION</scope>
    <scope>AUTOPHOSPHORYLATION</scope>
    <source>
        <tissue evidence="70">Placenta</tissue>
    </source>
</reference>
<reference evidence="67" key="3">
    <citation type="journal article" date="2004" name="Nat. Genet.">
        <title>Complete sequencing and characterization of 21,243 full-length human cDNAs.</title>
        <authorList>
            <person name="Ota T."/>
            <person name="Suzuki Y."/>
            <person name="Nishikawa T."/>
            <person name="Otsuki T."/>
            <person name="Sugiyama T."/>
            <person name="Irie R."/>
            <person name="Wakamatsu A."/>
            <person name="Hayashi K."/>
            <person name="Sato H."/>
            <person name="Nagai K."/>
            <person name="Kimura K."/>
            <person name="Makita H."/>
            <person name="Sekine M."/>
            <person name="Obayashi M."/>
            <person name="Nishi T."/>
            <person name="Shibahara T."/>
            <person name="Tanaka T."/>
            <person name="Ishii S."/>
            <person name="Yamamoto J."/>
            <person name="Saito K."/>
            <person name="Kawai Y."/>
            <person name="Isono Y."/>
            <person name="Nakamura Y."/>
            <person name="Nagahari K."/>
            <person name="Murakami K."/>
            <person name="Yasuda T."/>
            <person name="Iwayanagi T."/>
            <person name="Wagatsuma M."/>
            <person name="Shiratori A."/>
            <person name="Sudo H."/>
            <person name="Hosoiri T."/>
            <person name="Kaku Y."/>
            <person name="Kodaira H."/>
            <person name="Kondo H."/>
            <person name="Sugawara M."/>
            <person name="Takahashi M."/>
            <person name="Kanda K."/>
            <person name="Yokoi T."/>
            <person name="Furuya T."/>
            <person name="Kikkawa E."/>
            <person name="Omura Y."/>
            <person name="Abe K."/>
            <person name="Kamihara K."/>
            <person name="Katsuta N."/>
            <person name="Sato K."/>
            <person name="Tanikawa M."/>
            <person name="Yamazaki M."/>
            <person name="Ninomiya K."/>
            <person name="Ishibashi T."/>
            <person name="Yamashita H."/>
            <person name="Murakawa K."/>
            <person name="Fujimori K."/>
            <person name="Tanai H."/>
            <person name="Kimata M."/>
            <person name="Watanabe M."/>
            <person name="Hiraoka S."/>
            <person name="Chiba Y."/>
            <person name="Ishida S."/>
            <person name="Ono Y."/>
            <person name="Takiguchi S."/>
            <person name="Watanabe S."/>
            <person name="Yosida M."/>
            <person name="Hotuta T."/>
            <person name="Kusano J."/>
            <person name="Kanehori K."/>
            <person name="Takahashi-Fujii A."/>
            <person name="Hara H."/>
            <person name="Tanase T.-O."/>
            <person name="Nomura Y."/>
            <person name="Togiya S."/>
            <person name="Komai F."/>
            <person name="Hara R."/>
            <person name="Takeuchi K."/>
            <person name="Arita M."/>
            <person name="Imose N."/>
            <person name="Musashino K."/>
            <person name="Yuuki H."/>
            <person name="Oshima A."/>
            <person name="Sasaki N."/>
            <person name="Aotsuka S."/>
            <person name="Yoshikawa Y."/>
            <person name="Matsunawa H."/>
            <person name="Ichihara T."/>
            <person name="Shiohata N."/>
            <person name="Sano S."/>
            <person name="Moriya S."/>
            <person name="Momiyama H."/>
            <person name="Satoh N."/>
            <person name="Takami S."/>
            <person name="Terashima Y."/>
            <person name="Suzuki O."/>
            <person name="Nakagawa S."/>
            <person name="Senoh A."/>
            <person name="Mizoguchi H."/>
            <person name="Goto Y."/>
            <person name="Shimizu F."/>
            <person name="Wakebe H."/>
            <person name="Hishigaki H."/>
            <person name="Watanabe T."/>
            <person name="Sugiyama A."/>
            <person name="Takemoto M."/>
            <person name="Kawakami B."/>
            <person name="Yamazaki M."/>
            <person name="Watanabe K."/>
            <person name="Kumagai A."/>
            <person name="Itakura S."/>
            <person name="Fukuzumi Y."/>
            <person name="Fujimori Y."/>
            <person name="Komiyama M."/>
            <person name="Tashiro H."/>
            <person name="Tanigami A."/>
            <person name="Fujiwara T."/>
            <person name="Ono T."/>
            <person name="Yamada K."/>
            <person name="Fujii Y."/>
            <person name="Ozaki K."/>
            <person name="Hirao M."/>
            <person name="Ohmori Y."/>
            <person name="Kawabata A."/>
            <person name="Hikiji T."/>
            <person name="Kobatake N."/>
            <person name="Inagaki H."/>
            <person name="Ikema Y."/>
            <person name="Okamoto S."/>
            <person name="Okitani R."/>
            <person name="Kawakami T."/>
            <person name="Noguchi S."/>
            <person name="Itoh T."/>
            <person name="Shigeta K."/>
            <person name="Senba T."/>
            <person name="Matsumura K."/>
            <person name="Nakajima Y."/>
            <person name="Mizuno T."/>
            <person name="Morinaga M."/>
            <person name="Sasaki M."/>
            <person name="Togashi T."/>
            <person name="Oyama M."/>
            <person name="Hata H."/>
            <person name="Watanabe M."/>
            <person name="Komatsu T."/>
            <person name="Mizushima-Sugano J."/>
            <person name="Satoh T."/>
            <person name="Shirai Y."/>
            <person name="Takahashi Y."/>
            <person name="Nakagawa K."/>
            <person name="Okumura K."/>
            <person name="Nagase T."/>
            <person name="Nomura N."/>
            <person name="Kikuchi H."/>
            <person name="Masuho Y."/>
            <person name="Yamashita R."/>
            <person name="Nakai K."/>
            <person name="Yada T."/>
            <person name="Nakamura Y."/>
            <person name="Ohara O."/>
            <person name="Isogai T."/>
            <person name="Sugano S."/>
        </authorList>
    </citation>
    <scope>NUCLEOTIDE SEQUENCE [LARGE SCALE MRNA] (ISOFORM 2)</scope>
    <scope>VARIANTS THR-340 AND THR-521</scope>
    <source>
        <tissue evidence="71">Placenta</tissue>
    </source>
</reference>
<reference key="4">
    <citation type="journal article" date="2006" name="Nature">
        <title>The DNA sequence and biological annotation of human chromosome 1.</title>
        <authorList>
            <person name="Gregory S.G."/>
            <person name="Barlow K.F."/>
            <person name="McLay K.E."/>
            <person name="Kaul R."/>
            <person name="Swarbreck D."/>
            <person name="Dunham A."/>
            <person name="Scott C.E."/>
            <person name="Howe K.L."/>
            <person name="Woodfine K."/>
            <person name="Spencer C.C.A."/>
            <person name="Jones M.C."/>
            <person name="Gillson C."/>
            <person name="Searle S."/>
            <person name="Zhou Y."/>
            <person name="Kokocinski F."/>
            <person name="McDonald L."/>
            <person name="Evans R."/>
            <person name="Phillips K."/>
            <person name="Atkinson A."/>
            <person name="Cooper R."/>
            <person name="Jones C."/>
            <person name="Hall R.E."/>
            <person name="Andrews T.D."/>
            <person name="Lloyd C."/>
            <person name="Ainscough R."/>
            <person name="Almeida J.P."/>
            <person name="Ambrose K.D."/>
            <person name="Anderson F."/>
            <person name="Andrew R.W."/>
            <person name="Ashwell R.I.S."/>
            <person name="Aubin K."/>
            <person name="Babbage A.K."/>
            <person name="Bagguley C.L."/>
            <person name="Bailey J."/>
            <person name="Beasley H."/>
            <person name="Bethel G."/>
            <person name="Bird C.P."/>
            <person name="Bray-Allen S."/>
            <person name="Brown J.Y."/>
            <person name="Brown A.J."/>
            <person name="Buckley D."/>
            <person name="Burton J."/>
            <person name="Bye J."/>
            <person name="Carder C."/>
            <person name="Chapman J.C."/>
            <person name="Clark S.Y."/>
            <person name="Clarke G."/>
            <person name="Clee C."/>
            <person name="Cobley V."/>
            <person name="Collier R.E."/>
            <person name="Corby N."/>
            <person name="Coville G.J."/>
            <person name="Davies J."/>
            <person name="Deadman R."/>
            <person name="Dunn M."/>
            <person name="Earthrowl M."/>
            <person name="Ellington A.G."/>
            <person name="Errington H."/>
            <person name="Frankish A."/>
            <person name="Frankland J."/>
            <person name="French L."/>
            <person name="Garner P."/>
            <person name="Garnett J."/>
            <person name="Gay L."/>
            <person name="Ghori M.R.J."/>
            <person name="Gibson R."/>
            <person name="Gilby L.M."/>
            <person name="Gillett W."/>
            <person name="Glithero R.J."/>
            <person name="Grafham D.V."/>
            <person name="Griffiths C."/>
            <person name="Griffiths-Jones S."/>
            <person name="Grocock R."/>
            <person name="Hammond S."/>
            <person name="Harrison E.S.I."/>
            <person name="Hart E."/>
            <person name="Haugen E."/>
            <person name="Heath P.D."/>
            <person name="Holmes S."/>
            <person name="Holt K."/>
            <person name="Howden P.J."/>
            <person name="Hunt A.R."/>
            <person name="Hunt S.E."/>
            <person name="Hunter G."/>
            <person name="Isherwood J."/>
            <person name="James R."/>
            <person name="Johnson C."/>
            <person name="Johnson D."/>
            <person name="Joy A."/>
            <person name="Kay M."/>
            <person name="Kershaw J.K."/>
            <person name="Kibukawa M."/>
            <person name="Kimberley A.M."/>
            <person name="King A."/>
            <person name="Knights A.J."/>
            <person name="Lad H."/>
            <person name="Laird G."/>
            <person name="Lawlor S."/>
            <person name="Leongamornlert D.A."/>
            <person name="Lloyd D.M."/>
            <person name="Loveland J."/>
            <person name="Lovell J."/>
            <person name="Lush M.J."/>
            <person name="Lyne R."/>
            <person name="Martin S."/>
            <person name="Mashreghi-Mohammadi M."/>
            <person name="Matthews L."/>
            <person name="Matthews N.S.W."/>
            <person name="McLaren S."/>
            <person name="Milne S."/>
            <person name="Mistry S."/>
            <person name="Moore M.J.F."/>
            <person name="Nickerson T."/>
            <person name="O'Dell C.N."/>
            <person name="Oliver K."/>
            <person name="Palmeiri A."/>
            <person name="Palmer S.A."/>
            <person name="Parker A."/>
            <person name="Patel D."/>
            <person name="Pearce A.V."/>
            <person name="Peck A.I."/>
            <person name="Pelan S."/>
            <person name="Phelps K."/>
            <person name="Phillimore B.J."/>
            <person name="Plumb R."/>
            <person name="Rajan J."/>
            <person name="Raymond C."/>
            <person name="Rouse G."/>
            <person name="Saenphimmachak C."/>
            <person name="Sehra H.K."/>
            <person name="Sheridan E."/>
            <person name="Shownkeen R."/>
            <person name="Sims S."/>
            <person name="Skuce C.D."/>
            <person name="Smith M."/>
            <person name="Steward C."/>
            <person name="Subramanian S."/>
            <person name="Sycamore N."/>
            <person name="Tracey A."/>
            <person name="Tromans A."/>
            <person name="Van Helmond Z."/>
            <person name="Wall M."/>
            <person name="Wallis J.M."/>
            <person name="White S."/>
            <person name="Whitehead S.L."/>
            <person name="Wilkinson J.E."/>
            <person name="Willey D.L."/>
            <person name="Williams H."/>
            <person name="Wilming L."/>
            <person name="Wray P.W."/>
            <person name="Wu Z."/>
            <person name="Coulson A."/>
            <person name="Vaudin M."/>
            <person name="Sulston J.E."/>
            <person name="Durbin R.M."/>
            <person name="Hubbard T."/>
            <person name="Wooster R."/>
            <person name="Dunham I."/>
            <person name="Carter N.P."/>
            <person name="McVean G."/>
            <person name="Ross M.T."/>
            <person name="Harrow J."/>
            <person name="Olson M.V."/>
            <person name="Beck S."/>
            <person name="Rogers J."/>
            <person name="Bentley D.R."/>
        </authorList>
    </citation>
    <scope>NUCLEOTIDE SEQUENCE [LARGE SCALE GENOMIC DNA]</scope>
</reference>
<reference evidence="67" key="5">
    <citation type="journal article" date="2004" name="Genome Res.">
        <title>The status, quality, and expansion of the NIH full-length cDNA project: the Mammalian Gene Collection (MGC).</title>
        <authorList>
            <consortium name="The MGC Project Team"/>
        </authorList>
    </citation>
    <scope>NUCLEOTIDE SEQUENCE [LARGE SCALE MRNA] (ISOFORM 1)</scope>
    <source>
        <tissue evidence="69">Leukocyte</tissue>
        <tissue evidence="68">Lung</tissue>
    </source>
</reference>
<reference key="6">
    <citation type="journal article" date="2006" name="Nature">
        <title>Mitochondrial dysfunction in Drosophila PINK1 mutants is complemented by parkin.</title>
        <authorList>
            <person name="Park J."/>
            <person name="Lee S.B."/>
            <person name="Lee S."/>
            <person name="Kim Y."/>
            <person name="Song S."/>
            <person name="Kim S."/>
            <person name="Bae E."/>
            <person name="Kim J."/>
            <person name="Shong M."/>
            <person name="Kim J.M."/>
            <person name="Chung J."/>
        </authorList>
    </citation>
    <scope>SUBCELLULAR LOCATION</scope>
</reference>
<reference key="7">
    <citation type="journal article" date="2008" name="Biochem. Biophys. Res. Commun.">
        <title>PINK1 controls mitochondrial localization of Parkin through direct phosphorylation.</title>
        <authorList>
            <person name="Kim Y."/>
            <person name="Park J."/>
            <person name="Kim S."/>
            <person name="Song S."/>
            <person name="Kwon S.K."/>
            <person name="Lee S.H."/>
            <person name="Kitada T."/>
            <person name="Kim J.M."/>
            <person name="Chung J."/>
        </authorList>
    </citation>
    <scope>FUNCTION</scope>
    <scope>CATALYTIC ACTIVITY</scope>
    <scope>SUBCELLULAR LOCATION</scope>
    <scope>PHOSPHORYLATION</scope>
    <scope>MUTAGENESIS OF LYS-219; ASP-362 AND ASP-384</scope>
</reference>
<reference key="8">
    <citation type="journal article" date="2008" name="Proc. Natl. Acad. Sci. U.S.A.">
        <title>Pink1 regulates mitochondrial dynamics through interaction with the fission/fusion machinery.</title>
        <authorList>
            <person name="Yang Y."/>
            <person name="Ouyang Y."/>
            <person name="Yang L."/>
            <person name="Beal M.F."/>
            <person name="McQuibban A."/>
            <person name="Vogel H."/>
            <person name="Lu B."/>
        </authorList>
    </citation>
    <scope>FUNCTION</scope>
</reference>
<reference key="9">
    <citation type="journal article" date="2008" name="Proc. Natl. Acad. Sci. U.S.A.">
        <title>Pink1 regulates mitochondrial dynamics through interaction with the fission/fusion machinery.</title>
        <authorList>
            <person name="Yang Y."/>
            <person name="Ouyang Y."/>
            <person name="Yang L."/>
            <person name="Beal M.F."/>
            <person name="McQuibban A."/>
            <person name="Vogel H."/>
            <person name="Lu B."/>
        </authorList>
    </citation>
    <scope>ERRATUM OF PUBMED:18443288</scope>
</reference>
<reference key="10">
    <citation type="journal article" date="2008" name="Proc. Natl. Acad. Sci. U.S.A.">
        <title>The kinase domain of mitochondrial PINK1 faces the cytoplasm.</title>
        <authorList>
            <person name="Zhou C."/>
            <person name="Huang Y."/>
            <person name="Shao Y."/>
            <person name="May J."/>
            <person name="Prou D."/>
            <person name="Perier C."/>
            <person name="Dauer W."/>
            <person name="Schon E.A."/>
            <person name="Przedborski S."/>
        </authorList>
    </citation>
    <scope>SUBCELLULAR LOCATION</scope>
    <scope>MEMBRANE TOPOLOGY</scope>
</reference>
<reference key="11">
    <citation type="journal article" date="2009" name="J. Clin. Invest.">
        <title>Parkin, PINK1, and DJ-1 form a ubiquitin E3 ligase complex promoting unfolded protein degradation.</title>
        <authorList>
            <person name="Xiong H."/>
            <person name="Wang D."/>
            <person name="Chen L."/>
            <person name="Choo Y.S."/>
            <person name="Ma H."/>
            <person name="Tang C."/>
            <person name="Xia K."/>
            <person name="Jiang W."/>
            <person name="Ronai Z."/>
            <person name="Zhuang X."/>
            <person name="Zhang Z."/>
        </authorList>
    </citation>
    <scope>FUNCTION</scope>
    <scope>COMPONENT OF A COMPLEX COMPOSED OF PRKN; PARK7 AND PINK1</scope>
    <scope>SUBCELLULAR LOCATION</scope>
    <scope>PROTEOLYTIC CLEAVAGE</scope>
    <scope>CHARACTERIZATION OF VARIANTS PARK6 ASP-309 AND MET-313</scope>
    <scope>CHARACTERIZATION OF VARIANT LEU-399</scope>
</reference>
<reference key="12">
    <citation type="journal article" date="2010" name="Autophagy">
        <title>The PINK1/Parkin-mediated mitophagy is compromised by PD-associated mutations.</title>
        <authorList>
            <person name="Geisler S."/>
            <person name="Holmstrom K.M."/>
            <person name="Treis A."/>
            <person name="Skujat D."/>
            <person name="Weber S.S."/>
            <person name="Fiesel F.C."/>
            <person name="Kahle P.J."/>
            <person name="Springer W."/>
        </authorList>
    </citation>
    <scope>FUNCTION IN MITOCHONDRIAL AUTOPHAGY</scope>
    <scope>SUBCELLULAR LOCATION</scope>
    <scope>INTERACTION WITH PRKN</scope>
    <scope>CHARACTERIZATION OF VARIANTS PARK6 PRO-126; ASP-309 AND PRO-347</scope>
</reference>
<reference key="13">
    <citation type="journal article" date="2010" name="Brain Res.">
        <title>R492X mutation in PTEN-induced putative kinase 1 induced cellular mitochondrial dysfunction and oxidative stress.</title>
        <authorList>
            <person name="Yuan X.L."/>
            <person name="Guo J.F."/>
            <person name="Shi Z.H."/>
            <person name="Xiao Z.Q."/>
            <person name="Yan X.X."/>
            <person name="Zhao B.L."/>
            <person name="Tang B.S."/>
        </authorList>
    </citation>
    <scope>FUNCTION</scope>
    <scope>CHARACTERIZATION OF VARIANT PARK6 492-ARG--LYS-581 DEL</scope>
</reference>
<reference key="14">
    <citation type="journal article" date="2010" name="J. Cell Biol.">
        <title>PINK1 stabilized by mitochondrial depolarization recruits Parkin to damaged mitochondria and activates latent Parkin for mitophagy.</title>
        <authorList>
            <person name="Matsuda N."/>
            <person name="Sato S."/>
            <person name="Shiba K."/>
            <person name="Okatsu K."/>
            <person name="Saisho K."/>
            <person name="Gautier C.A."/>
            <person name="Sou Y.S."/>
            <person name="Saiki S."/>
            <person name="Kawajiri S."/>
            <person name="Sato F."/>
            <person name="Kimura M."/>
            <person name="Komatsu M."/>
            <person name="Hattori N."/>
            <person name="Tanaka K."/>
        </authorList>
    </citation>
    <scope>FUNCTION IN MITOCHONDRIAL AUTOPHAGY</scope>
    <scope>PHOSPHORYLATION</scope>
</reference>
<reference key="15">
    <citation type="journal article" date="2010" name="Proc. Natl. Acad. Sci. U.S.A.">
        <title>PINK1-dependent recruitment of Parkin to mitochondria in mitophagy.</title>
        <authorList>
            <person name="Vives-Bauza C."/>
            <person name="Zhou C."/>
            <person name="Huang Y."/>
            <person name="Cui M."/>
            <person name="de Vries R.L."/>
            <person name="Kim J."/>
            <person name="May J."/>
            <person name="Tocilescu M.A."/>
            <person name="Liu W."/>
            <person name="Ko H.S."/>
            <person name="Magrane J."/>
            <person name="Moore D.J."/>
            <person name="Dawson V.L."/>
            <person name="Grailhe R."/>
            <person name="Dawson T.M."/>
            <person name="Li C."/>
            <person name="Tieu K."/>
            <person name="Przedborski S."/>
        </authorList>
    </citation>
    <scope>FUNCTION IN MITOCHONDRIAL AUTOPHAGY</scope>
    <scope>INTERACTION WITH PRKN</scope>
</reference>
<reference key="16">
    <citation type="journal article" date="2011" name="PLoS ONE">
        <title>Bioenergetic consequences of PINK1 mutations in Parkinson disease.</title>
        <authorList>
            <person name="Abramov A.Y."/>
            <person name="Gegg M."/>
            <person name="Grunewald A."/>
            <person name="Wood N.W."/>
            <person name="Klein C."/>
            <person name="Schapira A.H."/>
        </authorList>
    </citation>
    <scope>INVOLVEMENT IN PARK6</scope>
</reference>
<reference key="17">
    <citation type="journal article" date="2012" name="EMBO Rep.">
        <title>Mitochondrial processing peptidase regulates PINK1 processing, import and Parkin recruitment.</title>
        <authorList>
            <person name="Greene A.W."/>
            <person name="Grenier K."/>
            <person name="Aguileta M.A."/>
            <person name="Muise S."/>
            <person name="Farazifard R."/>
            <person name="Haque M.E."/>
            <person name="McBride H.M."/>
            <person name="Park D.S."/>
            <person name="Fon E.A."/>
        </authorList>
    </citation>
    <scope>PROTEOLYTIC CLEAVAGE</scope>
    <scope>SUBCELLULAR LOCATION</scope>
</reference>
<reference key="18">
    <citation type="journal article" date="2012" name="Nat. Commun.">
        <title>PINK1 autophosphorylation upon membrane potential dissipation is essential for Parkin recruitment to damaged mitochondria.</title>
        <authorList>
            <person name="Okatsu K."/>
            <person name="Oka T."/>
            <person name="Iguchi M."/>
            <person name="Imamura K."/>
            <person name="Kosako H."/>
            <person name="Tani N."/>
            <person name="Kimura M."/>
            <person name="Go E."/>
            <person name="Koyano F."/>
            <person name="Funayama M."/>
            <person name="Shiba-Fukushima K."/>
            <person name="Sato S."/>
            <person name="Shimizu H."/>
            <person name="Fukunaga Y."/>
            <person name="Taniguchi H."/>
            <person name="Komatsu M."/>
            <person name="Hattori N."/>
            <person name="Mihara K."/>
            <person name="Tanaka K."/>
            <person name="Matsuda N."/>
        </authorList>
    </citation>
    <scope>PHOSPHORYLATION AT SER-228 AND SER-402</scope>
</reference>
<reference key="19">
    <citation type="journal article" date="2012" name="PLoS Genet.">
        <title>Parkinson's disease-associated kinase PINK1 regulates Miro protein level and axonal transport of mitochondria.</title>
        <authorList>
            <person name="Liu S."/>
            <person name="Sawada T."/>
            <person name="Lee S."/>
            <person name="Yu W."/>
            <person name="Silverio G."/>
            <person name="Alapatt P."/>
            <person name="Millan I."/>
            <person name="Shen A."/>
            <person name="Saxton W."/>
            <person name="Kanao T."/>
            <person name="Takahashi R."/>
            <person name="Hattori N."/>
            <person name="Imai Y."/>
            <person name="Lu B."/>
        </authorList>
    </citation>
    <scope>FUNCTION</scope>
    <scope>CHARACTERIZATION OF VARIANT PARK6 PRO-347</scope>
</reference>
<reference key="20">
    <citation type="journal article" date="2013" name="J. Biol. Chem.">
        <title>Parkin-catalyzed ubiquitin-ester transfer is triggered by PINK1-dependent phosphorylation.</title>
        <authorList>
            <person name="Iguchi M."/>
            <person name="Kujuro Y."/>
            <person name="Okatsu K."/>
            <person name="Koyano F."/>
            <person name="Kosako H."/>
            <person name="Kimura M."/>
            <person name="Suzuki N."/>
            <person name="Uchiyama S."/>
            <person name="Tanaka K."/>
            <person name="Matsuda N."/>
        </authorList>
    </citation>
    <scope>FUNCTION</scope>
</reference>
<reference key="21">
    <citation type="journal article" date="2013" name="Nat. Neurosci.">
        <title>The Parkinson's disease-linked proteins Fbxo7 and Parkin interact to mediate mitophagy.</title>
        <authorList>
            <person name="Burchell V.S."/>
            <person name="Nelson D.E."/>
            <person name="Sanchez-Martinez A."/>
            <person name="Delgado-Camprubi M."/>
            <person name="Ivatt R.M."/>
            <person name="Pogson J.H."/>
            <person name="Randle S.J."/>
            <person name="Wray S."/>
            <person name="Lewis P.A."/>
            <person name="Houlden H."/>
            <person name="Abramov A.Y."/>
            <person name="Hardy J."/>
            <person name="Wood N.W."/>
            <person name="Whitworth A.J."/>
            <person name="Laman H."/>
            <person name="Plun-Favreau H."/>
        </authorList>
    </citation>
    <scope>FUNCTION</scope>
    <scope>SUBCELLULAR LOCATION</scope>
    <scope>INTERACTION WITH FBXO7</scope>
</reference>
<reference key="22">
    <citation type="journal article" date="2013" name="Science">
        <title>PINK1-phosphorylated mitofusin 2 is a Parkin receptor for culling damaged mitochondria.</title>
        <authorList>
            <person name="Chen Y."/>
            <person name="Dorn G.W. II"/>
        </authorList>
    </citation>
    <scope>FUNCTION IN MITOPHAGY</scope>
    <scope>MUTAGENESIS OF LYS-219; ASP-362 AND ASP-384</scope>
</reference>
<reference key="23">
    <citation type="journal article" date="2014" name="Biochem. J.">
        <title>Parkin is activated by PINK1-dependent phosphorylation of ubiquitin at Ser65.</title>
        <authorList>
            <person name="Kazlauskaite A."/>
            <person name="Kondapalli C."/>
            <person name="Gourlay R."/>
            <person name="Campbell D.G."/>
            <person name="Ritorto M.S."/>
            <person name="Hofmann K."/>
            <person name="Alessi D.R."/>
            <person name="Knebel A."/>
            <person name="Trost M."/>
            <person name="Muqit M.M."/>
        </authorList>
    </citation>
    <scope>FUNCTION</scope>
    <scope>CATALYTIC ACTIVITY</scope>
</reference>
<reference key="24">
    <citation type="journal article" date="2014" name="Elife">
        <title>MUL1 acts in parallel to the PINK1/parkin pathway in regulating mitofusin and compensates for loss of PINK1/parkin.</title>
        <authorList>
            <person name="Yun J."/>
            <person name="Puri R."/>
            <person name="Yang H."/>
            <person name="Lizzio M.A."/>
            <person name="Wu C."/>
            <person name="Sheng Z.H."/>
            <person name="Guo M."/>
        </authorList>
    </citation>
    <scope>FUNCTION</scope>
</reference>
<reference key="25">
    <citation type="journal article" date="2014" name="J. Cell Biol.">
        <title>PINK1 phosphorylates ubiquitin to activate Parkin E3 ubiquitin ligase activity.</title>
        <authorList>
            <person name="Kane L.A."/>
            <person name="Lazarou M."/>
            <person name="Fogel A.I."/>
            <person name="Li Y."/>
            <person name="Yamano K."/>
            <person name="Sarraf S.A."/>
            <person name="Banerjee S."/>
            <person name="Youle R.J."/>
        </authorList>
    </citation>
    <scope>FUNCTION</scope>
    <scope>CATALYTIC ACTIVITY</scope>
</reference>
<reference key="26">
    <citation type="journal article" date="2014" name="Nature">
        <title>Ubiquitin is phosphorylated by PINK1 to activate parkin.</title>
        <authorList>
            <person name="Koyano F."/>
            <person name="Okatsu K."/>
            <person name="Kosako H."/>
            <person name="Tamura Y."/>
            <person name="Go E."/>
            <person name="Kimura M."/>
            <person name="Kimura Y."/>
            <person name="Tsuchiya H."/>
            <person name="Yoshihara H."/>
            <person name="Hirokawa T."/>
            <person name="Endo T."/>
            <person name="Fon E.A."/>
            <person name="Trempe J.F."/>
            <person name="Saeki Y."/>
            <person name="Tanaka K."/>
            <person name="Matsuda N."/>
        </authorList>
    </citation>
    <scope>FUNCTION</scope>
    <scope>CATALYTIC ACTIVITY</scope>
    <scope>CHARACTERIZATION OF VARIANTS PARK6 PRO-168 AND ALA-386</scope>
</reference>
<reference key="27">
    <citation type="journal article" date="2014" name="Nature">
        <title>The mitochondrial deubiquitinase USP30 opposes parkin-mediated mitophagy.</title>
        <authorList>
            <person name="Bingol B."/>
            <person name="Tea J.S."/>
            <person name="Phu L."/>
            <person name="Reichelt M."/>
            <person name="Bakalarski C.E."/>
            <person name="Song Q."/>
            <person name="Foreman O."/>
            <person name="Kirkpatrick D.S."/>
            <person name="Sheng M."/>
        </authorList>
    </citation>
    <scope>FUNCTION</scope>
</reference>
<reference key="28">
    <citation type="journal article" date="2014" name="PLoS Genet.">
        <title>Phosphorylation of mitochondrial polyubiquitin by PINK1 promotes Parkin mitochondrial tethering.</title>
        <authorList>
            <person name="Shiba-Fukushima K."/>
            <person name="Arano T."/>
            <person name="Matsumoto G."/>
            <person name="Inoshita T."/>
            <person name="Yoshida S."/>
            <person name="Ishihama Y."/>
            <person name="Ryu K.Y."/>
            <person name="Nukina N."/>
            <person name="Hattori N."/>
            <person name="Imai Y."/>
        </authorList>
    </citation>
    <scope>FUNCTION</scope>
</reference>
<reference key="29">
    <citation type="journal article" date="2014" name="Science">
        <title>PINK1 loss-of-function mutations affect mitochondrial complex I activity via NdufA10 ubiquinone uncoupling.</title>
        <authorList>
            <person name="Morais V.A."/>
            <person name="Haddad D."/>
            <person name="Craessaerts K."/>
            <person name="De Bock P.J."/>
            <person name="Swerts J."/>
            <person name="Vilain S."/>
            <person name="Aerts L."/>
            <person name="Overbergh L."/>
            <person name="Gruenewald A."/>
            <person name="Seibler P."/>
            <person name="Klein C."/>
            <person name="Gevaert K."/>
            <person name="Verstreken P."/>
            <person name="De Strooper B."/>
        </authorList>
    </citation>
    <scope>VARIANTS PARK6 GLY-170 AND 456-GLN--LEU-581 DEL</scope>
</reference>
<reference key="30">
    <citation type="journal article" date="2015" name="EMBO J.">
        <title>Ubiquitin Ser65 phosphorylation affects ubiquitin structure, chain assembly and hydrolysis.</title>
        <authorList>
            <person name="Wauer T."/>
            <person name="Swatek K.N."/>
            <person name="Wagstaff J.L."/>
            <person name="Gladkova C."/>
            <person name="Pruneda J.N."/>
            <person name="Michel M.A."/>
            <person name="Gersch M."/>
            <person name="Johnson C.M."/>
            <person name="Freund S.M."/>
            <person name="Komander D."/>
        </authorList>
    </citation>
    <scope>FUNCTION</scope>
</reference>
<reference key="31">
    <citation type="journal article" date="2019" name="Mol. Cell">
        <title>Reciprocal roles of Tom7 and OMA1 during mitochondrial import and activation of PINK1.</title>
        <authorList>
            <person name="Sekine S."/>
            <person name="Wang C."/>
            <person name="Sideris D.P."/>
            <person name="Bunker E."/>
            <person name="Zhang Z."/>
            <person name="Youle R.J."/>
        </authorList>
    </citation>
    <scope>PROTEOLYTIC CLEAVAGE</scope>
    <scope>SUBCELLULAR LOCATION</scope>
    <scope>MUTAGENESIS OF 112-GLU--GLU-117</scope>
</reference>
<reference key="32">
    <citation type="journal article" date="2019" name="IScience">
        <title>Rewiring of the Human Mitochondrial Interactome during Neuronal Reprogramming Reveals Regulators of the Respirasome and Neurogenesis.</title>
        <authorList>
            <person name="Moutaoufik M.T."/>
            <person name="Malty R."/>
            <person name="Amin S."/>
            <person name="Zhang Q."/>
            <person name="Phanse S."/>
            <person name="Gagarinova A."/>
            <person name="Zilocchi M."/>
            <person name="Hoell L."/>
            <person name="Minic Z."/>
            <person name="Gagarinova M."/>
            <person name="Aoki H."/>
            <person name="Stockwell J."/>
            <person name="Jessulat M."/>
            <person name="Goebels F."/>
            <person name="Broderick K."/>
            <person name="Scott N.E."/>
            <person name="Vlasblom J."/>
            <person name="Musso G."/>
            <person name="Prasad B."/>
            <person name="Lamantea E."/>
            <person name="Garavaglia B."/>
            <person name="Rajput A."/>
            <person name="Murayama K."/>
            <person name="Okazaki Y."/>
            <person name="Foster L.J."/>
            <person name="Bader G.D."/>
            <person name="Cayabyab F.S."/>
            <person name="Babu M."/>
        </authorList>
    </citation>
    <scope>IDENTIFICATION BY MASS SPECTROMETRY</scope>
    <scope>INTERACTION WITH NENF</scope>
    <scope>SUBCELLULAR LOCATION</scope>
</reference>
<reference key="33">
    <citation type="journal article" date="2020" name="Proc. Natl. Acad. Sci. U.S.A.">
        <title>Decision between mitophagy and apoptosis by Parkin via VDAC1 ubiquitination.</title>
        <authorList>
            <person name="Ham S.J."/>
            <person name="Lee D."/>
            <person name="Yoo H."/>
            <person name="Jun K."/>
            <person name="Shin H."/>
            <person name="Chung J."/>
        </authorList>
    </citation>
    <scope>FUNCTION</scope>
    <scope>MUTAGENESIS OF LYS-219; ASP-362 AND ASP-384</scope>
</reference>
<reference key="34">
    <citation type="journal article" date="2020" name="EMBO Rep.">
        <title>PINK1 phosphorylates Drp1S616 to regulate mitophagy-independent mitochondrial dynamics.</title>
        <authorList>
            <person name="Han H."/>
            <person name="Tan J."/>
            <person name="Wang R."/>
            <person name="Wan H."/>
            <person name="He Y."/>
            <person name="Yan X."/>
            <person name="Guo J."/>
            <person name="Gao Q."/>
            <person name="Li J."/>
            <person name="Shang S."/>
            <person name="Chen F."/>
            <person name="Tian R."/>
            <person name="Liu W."/>
            <person name="Liao L."/>
            <person name="Tang B."/>
            <person name="Zhang Z."/>
        </authorList>
    </citation>
    <scope>FUNCTION</scope>
    <scope>CATALYTIC ACTIVITY</scope>
    <scope>MUTAGENESIS OF GLY-309 AND ASP-384</scope>
    <scope>CHARACTERIZATION OF VARIANTS ASP-309; MET-313 AND 492-ARG--LYS-581 DEL</scope>
</reference>
<reference key="35">
    <citation type="journal article" date="2017" name="Nat. Commun.">
        <title>PINK1-mediated phosphorylation of LETM1 regulates mitochondrial calcium transport and protects neurons against mitochondrial stress.</title>
        <authorList>
            <person name="Huang E."/>
            <person name="Qu D."/>
            <person name="Huang T."/>
            <person name="Rizzi N."/>
            <person name="Boonying W."/>
            <person name="Krolak D."/>
            <person name="Ciana P."/>
            <person name="Woulfe J."/>
            <person name="Klein C."/>
            <person name="Slack R.S."/>
            <person name="Figeys D."/>
            <person name="Park D.S."/>
        </authorList>
    </citation>
    <scope>FUNCTION</scope>
    <scope>CATALYTIC ACTIVITY</scope>
</reference>
<reference key="36">
    <citation type="journal article" date="2022" name="J. Mol. Med.">
        <title>The role of the individual TOM subunits in the association of PINK1 with depolarized mitochondria.</title>
        <authorList>
            <person name="Maruszczak K.K."/>
            <person name="Jung M."/>
            <person name="Rasool S."/>
            <person name="Trempe J.F."/>
            <person name="Rapaport D."/>
        </authorList>
    </citation>
    <scope>INTERACTION WITH TOMM70</scope>
</reference>
<reference key="37">
    <citation type="journal article" date="2023" name="Cell Rep.">
        <title>TIM23 facilitates PINK1 activation by safeguarding against OMA1-mediated degradation in damaged mitochondria.</title>
        <authorList>
            <person name="Akabane S."/>
            <person name="Watanabe K."/>
            <person name="Kosako H."/>
            <person name="Yamashita S.I."/>
            <person name="Nishino K."/>
            <person name="Kato M."/>
            <person name="Sekine S."/>
            <person name="Kanki T."/>
            <person name="Matsuda N."/>
            <person name="Endo T."/>
            <person name="Oka T."/>
        </authorList>
    </citation>
    <scope>INTERACTION WITH TIMM23</scope>
    <scope>CHARACTERIZATION OF VARIANTS LEU-52; PHE-67; PRO-68; VAL-78; PHE-92; TRP-98; SER-111; LEU-115; VAL-124; GLY-125; PRO-126; MET-145; HIS-147; TRP-148; PRO-168; LYS-240; GLN-271; ASP-309; PRO-347; ALA-386; VAL-409; GLY-417 AND GLN-534 INS</scope>
</reference>
<reference key="38">
    <citation type="journal article" date="2024" name="Proc. Natl. Acad. Sci. U.S.A.">
        <title>Tom20 gates PINK1 activity and mediates its tethering of the TOM and TIM23 translocases upon mitochondrial stress.</title>
        <authorList>
            <person name="Eldeeb M.A."/>
            <person name="Bayne A.N."/>
            <person name="Fallahi A."/>
            <person name="Goiran T."/>
            <person name="MacDougall E.J."/>
            <person name="Soumbasis A."/>
            <person name="Zorca C.E."/>
            <person name="Tabah J.J."/>
            <person name="Thomas R.A."/>
            <person name="Karpilovsky N."/>
            <person name="Mathur M."/>
            <person name="Durcan T.M."/>
            <person name="Trempe J.F."/>
            <person name="Fon E.A."/>
        </authorList>
    </citation>
    <scope>INTERACTION WITH TOM AND TIM23 COMPLEXES</scope>
    <scope>INTERACTION WITH TOMM20</scope>
    <scope>MUTAGENESIS OF ILE-131; ALA-536; LEU-540 AND ARG-543</scope>
    <scope>CHARACTERIZATION OF VARIANTS SER-111; LEU-115; GLY-125 AND PRO-126</scope>
</reference>
<reference key="39">
    <citation type="journal article" date="2024" name="Sci. Adv.">
        <title>Mechanism of human PINK1 activation at the TOM complex in a reconstituted system.</title>
        <authorList>
            <person name="Raimi O.G."/>
            <person name="Ojha H."/>
            <person name="Ehses K."/>
            <person name="Dederer V."/>
            <person name="Lange S.M."/>
            <person name="Rivera C.P."/>
            <person name="Deegan T.D."/>
            <person name="Chen Y."/>
            <person name="Wightman M."/>
            <person name="Toth R."/>
            <person name="Labib K.P.M."/>
            <person name="Mathea S."/>
            <person name="Ranson N."/>
            <person name="Fernandez-Busnadiego R."/>
            <person name="Muqit M.M.K."/>
        </authorList>
    </citation>
    <scope>INTERACTION WITH TOMM20</scope>
    <scope>MUTAGENESIS OF LEU-532; LEU-539 AND LEU-540</scope>
    <scope>CHARACTERIZATION OF VARIANTS PRO-126; LYS-240; ASP-309 AND GLN-534 INS</scope>
</reference>
<reference key="40">
    <citation type="journal article" date="2004" name="Ann. Neurol.">
        <title>PINK1 mutations are associated with sporadic early-onset parkinsonism.</title>
        <authorList>
            <person name="Valente E.M."/>
            <person name="Salvi S."/>
            <person name="Ialongo T."/>
            <person name="Marongiu R."/>
            <person name="Elia A.E."/>
            <person name="Caputo V."/>
            <person name="Romito L."/>
            <person name="Albanese A."/>
            <person name="Dallapiccola B."/>
            <person name="Bentivoglio A.R."/>
        </authorList>
    </citation>
    <scope>VARIANTS PARK6 PHE-92; PRO-168 AND HIS-464</scope>
    <scope>VARIANTS LEU-296; THR-340; THR-442; LYS-476; THR-521 AND ASN-525</scope>
</reference>
<reference key="41">
    <citation type="journal article" date="2004" name="Ann. Neurol.">
        <title>Novel PINK1 mutations in early-onset parkinsonism.</title>
        <authorList>
            <person name="Hatano Y."/>
            <person name="Li Y."/>
            <person name="Sato K."/>
            <person name="Asakawa S."/>
            <person name="Yamamura Y."/>
            <person name="Tomiyama H."/>
            <person name="Yoshino H."/>
            <person name="Asahina M."/>
            <person name="Kobayashi S."/>
            <person name="Hassin-Baer S."/>
            <person name="Lu C.-S."/>
            <person name="Ng A.R."/>
            <person name="Rosales R.L."/>
            <person name="Shimizu N."/>
            <person name="Toda T."/>
            <person name="Mizuno Y."/>
            <person name="Hattori N."/>
        </authorList>
    </citation>
    <scope>VARIANTS PARK6 GLN-271; PRO-347 AND GLY-417</scope>
</reference>
<reference key="42">
    <citation type="journal article" date="2004" name="Ann. Neurol.">
        <authorList>
            <person name="Hatano Y."/>
            <person name="Li Y."/>
            <person name="Sato K."/>
            <person name="Asakawa S."/>
            <person name="Yamamura Y."/>
            <person name="Tomiyama H."/>
            <person name="Yoshino H."/>
            <person name="Asahina M."/>
            <person name="Kobayashi S."/>
            <person name="Hassin-Baer S."/>
            <person name="Lu C.-S."/>
            <person name="Ng A.R."/>
            <person name="Rosales R.L."/>
            <person name="Shimizu N."/>
            <person name="Toda T."/>
            <person name="Mizuno Y."/>
            <person name="Hattori N."/>
        </authorList>
    </citation>
    <scope>ERRATUM OF PUBMED:15349870</scope>
</reference>
<reference key="43">
    <citation type="journal article" date="2004" name="Arch. Neurol.">
        <title>Analysis of the PINK1 gene in a large cohort of cases with Parkinson disease.</title>
        <authorList>
            <person name="Rogaeva E."/>
            <person name="Johnson J."/>
            <person name="Lang A.E."/>
            <person name="Gulick C."/>
            <person name="Gwinn-Hardy K."/>
            <person name="Kawarai T."/>
            <person name="Sato C."/>
            <person name="Morgan A."/>
            <person name="Werner J."/>
            <person name="Nussbaum R."/>
            <person name="Petit A."/>
            <person name="Okun M.S."/>
            <person name="McInerney A."/>
            <person name="Mandel R."/>
            <person name="Groen J.L."/>
            <person name="Fernandez H.H."/>
            <person name="Postuma R."/>
            <person name="Foote K.D."/>
            <person name="Salehi-Rad S."/>
            <person name="Liang Y."/>
            <person name="Reimsnider S."/>
            <person name="Tandon A."/>
            <person name="Hardy J."/>
            <person name="St George-Hyslop P."/>
            <person name="Singleton A.B."/>
        </authorList>
    </citation>
    <scope>VARIANTS PARK6 LYS-240; PRO-347 AND PRO-489</scope>
    <scope>VARIANTS GLY-231; ILE-235; GLY-263; LEU-318; THR-339; THR-340; HIS-362; SER-425; LYS-476 AND THR-521</scope>
</reference>
<reference key="44">
    <citation type="journal article" date="2004" name="Neurology">
        <title>PINK1 (PARK6) associated Parkinson disease in Ireland.</title>
        <authorList>
            <person name="Healy D.G."/>
            <person name="Abou-Sleiman P.M."/>
            <person name="Gibson J.M."/>
            <person name="Ross O.A."/>
            <person name="Jain S."/>
            <person name="Gandhi S."/>
            <person name="Gosal D."/>
            <person name="Muqit M.M.K."/>
            <person name="Wood N.W."/>
            <person name="Lynch T."/>
        </authorList>
    </citation>
    <scope>VARIANT PARK6 HIS-147</scope>
</reference>
<reference key="45">
    <citation type="journal article" date="2004" name="Science">
        <title>Hereditary early-onset Parkinson's disease caused by mutations in PINK1.</title>
        <authorList>
            <person name="Valente E.M."/>
            <person name="Abou-Sleiman P.M."/>
            <person name="Caputo V."/>
            <person name="Muqit M.M.K."/>
            <person name="Harvey K."/>
            <person name="Gispert S."/>
            <person name="Ali Z."/>
            <person name="Del Turco D."/>
            <person name="Bentivoglio A.R."/>
            <person name="Healy D.G."/>
            <person name="Albanese A."/>
            <person name="Nussbaum R."/>
            <person name="Gonzalez-Maldonado R."/>
            <person name="Deller T."/>
            <person name="Salvi S."/>
            <person name="Cortelli P."/>
            <person name="Gilks W.P."/>
            <person name="Latchman D.S."/>
            <person name="Harvey R.J."/>
            <person name="Dallapiccola B."/>
            <person name="Auburger G."/>
            <person name="Wood N.W."/>
        </authorList>
    </citation>
    <scope>VARIANT PARK6 ASP-309</scope>
    <scope>CHARACTERIZATION OF VARIANT PARK6 ASP-309</scope>
    <scope>FUNCTION</scope>
    <scope>SUBCELLULAR LOCATION</scope>
</reference>
<reference key="46">
    <citation type="journal article" date="2005" name="Clin. Genet.">
        <title>Analysis of PINK1 in Asian patients with familial parkinsonism.</title>
        <authorList>
            <person name="Tan E.K."/>
            <person name="Yew K."/>
            <person name="Chua E."/>
            <person name="Shen H."/>
            <person name="Jamora R.D."/>
            <person name="Lee E."/>
            <person name="Puong K.Y."/>
            <person name="Zhao Y."/>
            <person name="Pavanni R."/>
            <person name="Wong M.C."/>
            <person name="Puvan K."/>
            <person name="Yih Y."/>
            <person name="Tan L.C.S."/>
        </authorList>
    </citation>
    <scope>VARIANT PARK6 VAL-268</scope>
</reference>
<reference key="47">
    <citation type="journal article" date="2005" name="Eur. J. Hum. Genet.">
        <title>PINK1, Parkin, and DJ-1 mutations in Italian patients with early-onset parkinsonism.</title>
        <authorList>
            <person name="Klein C."/>
            <person name="Djarmati A."/>
            <person name="Hedrich K."/>
            <person name="Schaefer N."/>
            <person name="Scaglione C."/>
            <person name="Marchese R."/>
            <person name="Kock N."/>
            <person name="Schuele B."/>
            <person name="Hiller A."/>
            <person name="Lohnau T."/>
            <person name="Winkler S."/>
            <person name="Wiegers K."/>
            <person name="Hering R."/>
            <person name="Bauer P."/>
            <person name="Riess O."/>
            <person name="Abbruzzese G."/>
            <person name="Martinelli P."/>
            <person name="Pramstaller P.P."/>
        </authorList>
    </citation>
    <scope>VARIANTS PARK6 HIS-279 AND GLN-534 INS</scope>
    <scope>VARIANT LEU-115</scope>
</reference>
<reference key="48">
    <citation type="journal article" date="2005" name="Hum. Mol. Genet.">
        <title>Mitochondrial import and enzymatic activity of PINK1 mutants associated to recessive parkinsonism.</title>
        <authorList>
            <person name="Silvestri L."/>
            <person name="Caputo V."/>
            <person name="Bellacchio E."/>
            <person name="Atorino L."/>
            <person name="Dallapiccola B."/>
            <person name="Valente E.M."/>
            <person name="Casari G."/>
        </authorList>
    </citation>
    <scope>CHARACTERIZATION OF VARIANTS PARK6 PRO-168 AND ASP-309</scope>
</reference>
<reference key="49">
    <citation type="journal article" date="2005" name="Neurology">
        <title>Clinicogenetic study of PINK1 mutations in autosomal recessive early-onset parkinsonism.</title>
        <authorList>
            <person name="Li Y."/>
            <person name="Tomiyama H."/>
            <person name="Sato K."/>
            <person name="Hatano Y."/>
            <person name="Yoshino H."/>
            <person name="Atsumi M."/>
            <person name="Kitaguchi M."/>
            <person name="Sasaki S."/>
            <person name="Kawaguchi S."/>
            <person name="Miyajima H."/>
            <person name="Toda T."/>
            <person name="Mizuno Y."/>
            <person name="Hattori N."/>
        </authorList>
    </citation>
    <scope>VARIANT PARK6 ARG-388</scope>
</reference>
<reference key="50">
    <citation type="journal article" date="2005" name="Neurology">
        <title>Early-onset parkinsonism associated with PINK1 mutations: frequency, genotypes, and phenotypes.</title>
        <authorList>
            <consortium name="The Italian Parkinson genetics network"/>
            <person name="Bonifati V."/>
            <person name="Rohe C.F."/>
            <person name="Breedveld G.J."/>
            <person name="Fabrizio E."/>
            <person name="De Mari M."/>
            <person name="Tassorelli C."/>
            <person name="Tavella A."/>
            <person name="Marconi R."/>
            <person name="Nicholl D.J."/>
            <person name="Chien H.F."/>
            <person name="Fincati E."/>
            <person name="Abbruzzese G."/>
            <person name="Marini P."/>
            <person name="De Gaetano A."/>
            <person name="Horstink M.W."/>
            <person name="Maat-Kievit J.A."/>
            <person name="Sampaio C."/>
            <person name="Antonini A."/>
            <person name="Stocchi F."/>
            <person name="Montagna P."/>
            <person name="Toni V."/>
            <person name="Guidi M."/>
            <person name="Dalla Libera A."/>
            <person name="Tinazzi M."/>
            <person name="De Pandis F."/>
            <person name="Fabbrini G."/>
            <person name="Goldwurm S."/>
            <person name="de Klein A."/>
            <person name="Barbosa E."/>
            <person name="Lopiano L."/>
            <person name="Martignoni E."/>
            <person name="Lamberti P."/>
            <person name="Vanacore N."/>
            <person name="Meco G."/>
            <person name="Oostra B.A."/>
        </authorList>
    </citation>
    <scope>VARIANTS PARK6 PRO-168 AND LEU-196</scope>
    <scope>VARIANTS LEU-115; THR-340; LYS-476 AND THR-521</scope>
</reference>
<reference key="51">
    <citation type="journal article" date="2006" name="Ann. Neurol.">
        <title>A heterozygous effect for PINK1 mutations in Parkinson's disease?</title>
        <authorList>
            <person name="Abou-Sleiman P.M."/>
            <person name="Muqit M.M.K."/>
            <person name="McDonald N.Q."/>
            <person name="Yang Y.X."/>
            <person name="Gandhi S."/>
            <person name="Healy D.G."/>
            <person name="Harvey K."/>
            <person name="Harvey R.J."/>
            <person name="Deas E."/>
            <person name="Bhatia K."/>
            <person name="Quinn N."/>
            <person name="Lees A."/>
            <person name="Latchman D.S."/>
            <person name="Wood N.W."/>
        </authorList>
    </citation>
    <scope>VARIANTS ILE-317; THR-339; THR-383; SER-411; HIS-431; SER-451; SER-461; LYS-476; PRO-501 AND ARG-575</scope>
    <scope>CHARACTERIZATION OF VARIANTS HIS-431; SER-451; LYS-476; PRO-501 AND ARG-575</scope>
</reference>
<reference key="52">
    <citation type="journal article" date="2006" name="Arch. Neurol.">
        <title>Juvenile-onset Parkinsonism as a result of the first mutation in the adenosine triphosphate orientation domain of PINK1.</title>
        <authorList>
            <person name="Leutenegger A.-L."/>
            <person name="Salih M.A.M."/>
            <person name="Ibanez P."/>
            <person name="Mukhtar M.M."/>
            <person name="Lesage S."/>
            <person name="Arabi A."/>
            <person name="Lohmann E."/>
            <person name="Duerr A."/>
            <person name="Ahmed A.E.M."/>
            <person name="Brice A."/>
        </authorList>
    </citation>
    <scope>VARIANT PARK6 ASP-217</scope>
</reference>
<reference key="53">
    <citation type="journal article" date="2006" name="Arch. Neurol.">
        <title>T313M PINK1 mutation in an extended highly consanguineous Saudi family with early-onset Parkinson disease.</title>
        <authorList>
            <person name="Chishti M.A."/>
            <person name="Bohlega S."/>
            <person name="Ahmed M."/>
            <person name="Loualich A."/>
            <person name="Carroll P."/>
            <person name="Sato C."/>
            <person name="St George-Hyslop P."/>
            <person name="Westaway D."/>
            <person name="Rogaeva E."/>
        </authorList>
    </citation>
    <scope>VARIANT PARK6 MET-313</scope>
</reference>
<reference key="54">
    <citation type="journal article" date="2006" name="Brain">
        <title>Mutational analysis of the PINK1 gene in early-onset parkinsonism in Europe and North Africa.</title>
        <authorList>
            <consortium name="The French Parkinson's disease genetics study group"/>
            <person name="Ibanez P."/>
            <person name="Lesage S."/>
            <person name="Lohmann E."/>
            <person name="Thobois S."/>
            <person name="De Michele G."/>
            <person name="Borg M."/>
            <person name="Agid Y."/>
            <person name="Durr A."/>
            <person name="Brice A."/>
        </authorList>
    </citation>
    <scope>VARIANTS PARK6 GLY-125; LYS-240; PRO-369; ALA-386 AND VAL-409</scope>
</reference>
<reference key="55">
    <citation type="journal article" date="2006" name="Hum. Mol. Genet.">
        <title>Association of PINK1 and DJ-1 confers digenic inheritance of early-onset Parkinson's disease.</title>
        <authorList>
            <person name="Tang B."/>
            <person name="Xiong H."/>
            <person name="Sun P."/>
            <person name="Zhang Y."/>
            <person name="Wang D."/>
            <person name="Hu Z."/>
            <person name="Zhu Z."/>
            <person name="Ma H."/>
            <person name="Pan Q."/>
            <person name="Xia J.-H."/>
            <person name="Xia K."/>
            <person name="Zhang Z."/>
        </authorList>
    </citation>
    <scope>VARIANT LEU-399</scope>
</reference>
<reference key="56">
    <citation type="journal article" date="2006" name="Mov. Disord.">
        <title>PINK1 mutations in sporadic early-onset Parkinson's disease.</title>
        <authorList>
            <person name="Tan E.-K."/>
            <person name="Yew K."/>
            <person name="Chua E."/>
            <person name="Puvan K."/>
            <person name="Shen H."/>
            <person name="Lee E."/>
            <person name="Puong K.-Y."/>
            <person name="Zhao Y."/>
            <person name="Pavanni R."/>
            <person name="Wong M.-C."/>
            <person name="Jamora D."/>
            <person name="de Silva D."/>
            <person name="Moe K.-T."/>
            <person name="Woon F.-P."/>
            <person name="Yuen Y."/>
            <person name="Tan L."/>
        </authorList>
    </citation>
    <scope>VARIANT PARK6 THR-280</scope>
    <scope>VARIANTS THR-340 AND THR-521</scope>
</reference>
<reference key="57">
    <citation type="journal article" date="2006" name="Neurosci. Lett.">
        <title>Analysis of the PINK1 gene in a cohort of patients with sporadic early-onset parkinsonism in Taiwan.</title>
        <authorList>
            <person name="Fung H.-C."/>
            <person name="Chen C.-M."/>
            <person name="Hardy J."/>
            <person name="Singleton A.B."/>
            <person name="Lee-Chen G.-J."/>
            <person name="Wu Y.-R."/>
        </authorList>
    </citation>
    <scope>VARIANT PARK6 GLN-407</scope>
    <scope>VARIANTS THR-340 AND THR-521</scope>
</reference>
<reference key="58">
    <citation type="journal article" date="2007" name="Nature">
        <title>Patterns of somatic mutation in human cancer genomes.</title>
        <authorList>
            <person name="Greenman C."/>
            <person name="Stephens P."/>
            <person name="Smith R."/>
            <person name="Dalgliesh G.L."/>
            <person name="Hunter C."/>
            <person name="Bignell G."/>
            <person name="Davies H."/>
            <person name="Teague J."/>
            <person name="Butler A."/>
            <person name="Stevens C."/>
            <person name="Edkins S."/>
            <person name="O'Meara S."/>
            <person name="Vastrik I."/>
            <person name="Schmidt E.E."/>
            <person name="Avis T."/>
            <person name="Barthorpe S."/>
            <person name="Bhamra G."/>
            <person name="Buck G."/>
            <person name="Choudhury B."/>
            <person name="Clements J."/>
            <person name="Cole J."/>
            <person name="Dicks E."/>
            <person name="Forbes S."/>
            <person name="Gray K."/>
            <person name="Halliday K."/>
            <person name="Harrison R."/>
            <person name="Hills K."/>
            <person name="Hinton J."/>
            <person name="Jenkinson A."/>
            <person name="Jones D."/>
            <person name="Menzies A."/>
            <person name="Mironenko T."/>
            <person name="Perry J."/>
            <person name="Raine K."/>
            <person name="Richardson D."/>
            <person name="Shepherd R."/>
            <person name="Small A."/>
            <person name="Tofts C."/>
            <person name="Varian J."/>
            <person name="Webb T."/>
            <person name="West S."/>
            <person name="Widaa S."/>
            <person name="Yates A."/>
            <person name="Cahill D.P."/>
            <person name="Louis D.N."/>
            <person name="Goldstraw P."/>
            <person name="Nicholson A.G."/>
            <person name="Brasseur F."/>
            <person name="Looijenga L."/>
            <person name="Weber B.L."/>
            <person name="Chiew Y.-E."/>
            <person name="DeFazio A."/>
            <person name="Greaves M.F."/>
            <person name="Green A.R."/>
            <person name="Campbell P."/>
            <person name="Birney E."/>
            <person name="Easton D.F."/>
            <person name="Chenevix-Trench G."/>
            <person name="Tan M.-H."/>
            <person name="Khoo S.K."/>
            <person name="Teh B.T."/>
            <person name="Yuen S.T."/>
            <person name="Leung S.Y."/>
            <person name="Wooster R."/>
            <person name="Futreal P.A."/>
            <person name="Stratton M.R."/>
        </authorList>
    </citation>
    <scope>VARIANTS [LARGE SCALE ANALYSIS] TRP-148; SER-196; LEU-209; LEU-215; THR-339; THR-340; ILE-341; PHE-377; THR-477 AND THR-521</scope>
</reference>
<reference key="59">
    <citation type="journal article" date="2008" name="Hum. Mutat.">
        <title>PINK1 heterozygous rare variants: prevalence, significance and phenotypic spectrum.</title>
        <authorList>
            <consortium name="The Italian PD study group"/>
            <person name="Marongiu R."/>
            <person name="Ferraris A."/>
            <person name="Ialongo T."/>
            <person name="Michiorri S."/>
            <person name="Soleti F."/>
            <person name="Ferrari F."/>
            <person name="Elia A.E."/>
            <person name="Ghezzi D."/>
            <person name="Albanese A."/>
            <person name="Altavista M.C."/>
            <person name="Antonini A."/>
            <person name="Barone P."/>
            <person name="Brusa L."/>
            <person name="Cortelli P."/>
            <person name="Martinelli P."/>
            <person name="Pellecchia M.T."/>
            <person name="Pezzoli G."/>
            <person name="Scaglione C."/>
            <person name="Stanzione P."/>
            <person name="Tinazzi M."/>
            <person name="Zecchinelli A."/>
            <person name="Zeviani M."/>
            <person name="Cassetta E."/>
            <person name="Garavaglia B."/>
            <person name="Dallapiccola B."/>
            <person name="Bentivoglio A.R."/>
            <person name="Valente E.M."/>
        </authorList>
    </citation>
    <scope>VARIANTS PHE-67; PRO-68; TRP-98; SER-111; VAL-124; MET-145; ASN-186; ILE-257; VAL-268; GLN-276; LEU-296; ILE-317; LEU-322; THR-339; THR-383; VAL-395; THR-442; LYS-476; ASN-525 AND THR-537</scope>
</reference>
<reference key="60">
    <citation type="journal article" date="2008" name="J. Neurol.">
        <title>Clinical and molecular characterisation of a Parkinson family with a novel PINK1 mutation.</title>
        <authorList>
            <person name="Prestel J."/>
            <person name="Gempel K."/>
            <person name="Hauser T.K."/>
            <person name="Schweitzer K."/>
            <person name="Prokisch H."/>
            <person name="Ahting U."/>
            <person name="Freudenstein D."/>
            <person name="Bueltmann E."/>
            <person name="Naegele T."/>
            <person name="Berg D."/>
            <person name="Klopstock T."/>
            <person name="Gasser T."/>
        </authorList>
    </citation>
    <scope>VARIANT PARK6 PRO-126</scope>
</reference>
<reference key="61">
    <citation type="journal article" date="2008" name="Mov. Disord.">
        <title>Mutation analysis of Parkin, PINK1, DJ-1 and ATP13A2 genes in Chinese patients with autosomal recessive early-onset Parkinsonism.</title>
        <authorList>
            <person name="Guo J.F."/>
            <person name="Xiao B."/>
            <person name="Liao B."/>
            <person name="Zhang X.W."/>
            <person name="Nie L.L."/>
            <person name="Zhang Y.H."/>
            <person name="Shen L."/>
            <person name="Jiang H."/>
            <person name="Xia K."/>
            <person name="Pan Q."/>
            <person name="Yan X.X."/>
            <person name="Tang B.S."/>
        </authorList>
    </citation>
    <scope>VARIANTS PARK6 MET-313 AND 492-ARG--LYS-581 DEL</scope>
</reference>
<reference key="62">
    <citation type="journal article" date="2009" name="J. Med. Genet.">
        <title>Parkin and PINK1 mutations in early-onset Parkinson's disease: comprehensive screening in publicly available cases and control.</title>
        <authorList>
            <person name="Brooks J."/>
            <person name="Ding J."/>
            <person name="Simon-Sanchez J."/>
            <person name="Paisan-Ruiz C."/>
            <person name="Singleton A.B."/>
            <person name="Scholz S.W."/>
        </authorList>
    </citation>
    <scope>VARIANT PARK6 LEU-52</scope>
</reference>
<reference key="63">
    <citation type="journal article" date="2012" name="Mov. Disord.">
        <title>Systematic review and UK-based study of PARK2 (parkin), PINK1, PARK7 (DJ-1) and LRRK2 in early-onset Parkinson's disease.</title>
        <authorList>
            <person name="Kilarski L.L."/>
            <person name="Pearson J.P."/>
            <person name="Newsway V."/>
            <person name="Majounie E."/>
            <person name="Knipe M.D."/>
            <person name="Misbahuddin A."/>
            <person name="Chinnery P.F."/>
            <person name="Burn D.J."/>
            <person name="Clarke C.E."/>
            <person name="Marion M.H."/>
            <person name="Lewthwaite A.J."/>
            <person name="Nicholl D.J."/>
            <person name="Wood N.W."/>
            <person name="Morrison K.E."/>
            <person name="Williams-Gray C.H."/>
            <person name="Evans J.R."/>
            <person name="Sawcer S.J."/>
            <person name="Barker R.A."/>
            <person name="Wickremaratchi M.M."/>
            <person name="Ben-Shlomo Y."/>
            <person name="Williams N.M."/>
            <person name="Morris H.R."/>
        </authorList>
    </citation>
    <scope>VARIANT PARK6 PRO-347</scope>
</reference>
<proteinExistence type="evidence at protein level"/>
<feature type="transit peptide" description="Mitochondrion" evidence="3">
    <location>
        <begin position="1"/>
        <end position="77"/>
    </location>
</feature>
<feature type="chain" id="PRO_0000024369" description="Serine/threonine-protein kinase PINK1, mitochondrial">
    <location>
        <begin position="78"/>
        <end position="581"/>
    </location>
</feature>
<feature type="topological domain" description="Mitochondrial intermembrane" evidence="3">
    <location>
        <begin position="78"/>
        <end position="93"/>
    </location>
</feature>
<feature type="transmembrane region" description="Helical" evidence="3">
    <location>
        <begin position="94"/>
        <end position="110"/>
    </location>
</feature>
<feature type="topological domain" description="Cytoplasmic" evidence="3">
    <location>
        <begin position="111"/>
        <end position="581"/>
    </location>
</feature>
<feature type="domain" description="Protein kinase" evidence="4 67">
    <location>
        <begin position="156"/>
        <end position="511"/>
    </location>
</feature>
<feature type="region of interest" description="Required for outer membrane localization" evidence="58">
    <location>
        <begin position="111"/>
        <end position="117"/>
    </location>
</feature>
<feature type="region of interest" description="Disordered" evidence="6">
    <location>
        <begin position="189"/>
        <end position="208"/>
    </location>
</feature>
<feature type="active site" description="Proton acceptor" evidence="4 5">
    <location>
        <position position="362"/>
    </location>
</feature>
<feature type="binding site" evidence="1 4">
    <location>
        <begin position="162"/>
        <end position="170"/>
    </location>
    <ligand>
        <name>ATP</name>
        <dbReference type="ChEBI" id="CHEBI:30616"/>
    </ligand>
</feature>
<feature type="binding site" evidence="4">
    <location>
        <position position="186"/>
    </location>
    <ligand>
        <name>ATP</name>
        <dbReference type="ChEBI" id="CHEBI:30616"/>
    </ligand>
</feature>
<feature type="modified residue" description="Phosphoserine; by autocatalysis" evidence="44">
    <location>
        <position position="228"/>
    </location>
</feature>
<feature type="modified residue" description="Phosphoserine; by autocatalysis" evidence="44">
    <location>
        <position position="402"/>
    </location>
</feature>
<feature type="splice variant" id="VSP_050754" description="In isoform 2." evidence="66">
    <location>
        <begin position="1"/>
        <end position="307"/>
    </location>
</feature>
<feature type="splice variant" id="VSP_050755" description="In isoform 2." evidence="66">
    <original>LGHGRTLFLVMKN</original>
    <variation>MCGSQRPSPLSTS</variation>
    <location>
        <begin position="308"/>
        <end position="320"/>
    </location>
</feature>
<feature type="sequence variant" id="VAR_089730" description="In PARK6; uncertain significance; no effect on interaction with TIMM23; dbSNP:rs776293086." evidence="36 63">
    <original>P</original>
    <variation>L</variation>
    <location>
        <position position="52"/>
    </location>
</feature>
<feature type="sequence variant" id="VAR_046566" description="No effect on interaction with TIMM23; dbSNP:rs763142730." evidence="30 63">
    <original>L</original>
    <variation>F</variation>
    <location>
        <position position="67"/>
    </location>
</feature>
<feature type="sequence variant" id="VAR_046567" description="No effect on interaction with TIMM23; dbSNP:rs1385309950." evidence="30 63">
    <original>R</original>
    <variation>P</variation>
    <location>
        <position position="68"/>
    </location>
</feature>
<feature type="sequence variant" id="VAR_089731" description="Severely decreased interaction with TIMM23; dbSNP:rs1409111496." evidence="63">
    <original>A</original>
    <variation>V</variation>
    <location>
        <position position="78"/>
    </location>
</feature>
<feature type="sequence variant" id="VAR_046568" description="In PARK6; uncertain significance; no effect on interaction with TIMM23; dbSNP:rs1553145550." evidence="11 63">
    <original>C</original>
    <variation>F</variation>
    <location>
        <position position="92"/>
    </location>
</feature>
<feature type="sequence variant" id="VAR_046569" description="Severely decreased interaction with TIMM23; dbSNP:rs575668171." evidence="30 63">
    <original>R</original>
    <variation>W</variation>
    <location>
        <position position="98"/>
    </location>
</feature>
<feature type="sequence variant" id="VAR_046570" description="Found in a patient with Parkinson disease; uncertain significance; under depolarizing conditions, it fails to support PINK1-TOM-TIM23 complex assembly and mitophagy activation; no effect on interaction with TIMM23; dbSNP:rs1553145560." evidence="30 63 64">
    <original>I</original>
    <variation>S</variation>
    <location>
        <position position="111"/>
    </location>
</feature>
<feature type="sequence variant" id="VAR_046571" description="Under depolarizing conditions, does not affect PINK1-TOM-TIM23 complex assembly and mitophagy activation; no effect on interaction with TIMM23; dbSNP:rs148871409." evidence="16 17 63 64">
    <original>Q</original>
    <variation>L</variation>
    <location>
        <position position="115"/>
    </location>
</feature>
<feature type="sequence variant" id="VAR_046572" description="No effect on interaction with TIMM23; dbSNP:rs1274588239." evidence="30 63">
    <original>A</original>
    <variation>V</variation>
    <location>
        <position position="124"/>
    </location>
</feature>
<feature type="sequence variant" id="VAR_062773" description="In PARK6; under depolarizing conditions, it fails to support PINK1-TOM-TIM23 complex assembly and mitophagy activation; no effect on interaction with TIMM23." evidence="21 63 64">
    <original>C</original>
    <variation>G</variation>
    <location>
        <position position="125"/>
    </location>
</feature>
<feature type="sequence variant" id="VAR_064344" description="In PARK6; strongly reduces interaction with PRKN; under depolarizing conditions, it fails to support PINK1-TOM-TIM23 complex assembly and mitophagy activation; loss of autophosphorylation on S-228 and kinase activation; no effect on interaction with TIMM23; dbSNP:rs775809722." evidence="29 40 63 64 65">
    <original>Q</original>
    <variation>P</variation>
    <location>
        <position position="126"/>
    </location>
</feature>
<feature type="sequence variant" id="VAR_046573" description="No effect on interaction with TIMM23; dbSNP:rs45604240." evidence="30 63">
    <original>T</original>
    <variation>M</variation>
    <location>
        <position position="145"/>
    </location>
</feature>
<feature type="sequence variant" id="VAR_046574" description="In PARK6; uncertain significance; no effect on interaction with TIMM23; dbSNP:rs138050841." evidence="13 63">
    <original>R</original>
    <variation>H</variation>
    <location>
        <position position="147"/>
    </location>
</feature>
<feature type="sequence variant" id="VAR_041010" description="No effect on interaction with TIMM23; dbSNP:rs56297806." evidence="28 63">
    <original>L</original>
    <variation>W</variation>
    <location>
        <position position="148"/>
    </location>
</feature>
<feature type="sequence variant" id="VAR_046575" description="In PARK6; no effect on autophosphorylation; localizes to the mitochondria and immunogold experiments reveal that both wild-type and mutant proteins face the mitochondrial intermembrane space; no effect on interaction with TIMM23; dbSNP:rs768091663." evidence="11 17 19 52 63">
    <original>A</original>
    <variation>P</variation>
    <location>
        <position position="168"/>
    </location>
</feature>
<feature type="sequence variant" id="VAR_078934" description="In PARK6; dbSNP:rs1553145929." evidence="49">
    <original>V</original>
    <variation>G</variation>
    <location>
        <position position="170"/>
    </location>
</feature>
<feature type="sequence variant" id="VAR_046576" description="In dbSNP:rs143204084." evidence="30">
    <original>K</original>
    <variation>N</variation>
    <location>
        <position position="186"/>
    </location>
</feature>
<feature type="sequence variant" id="VAR_046577" description="In PARK6; dbSNP:rs138302371." evidence="17">
    <original>P</original>
    <variation>L</variation>
    <location>
        <position position="196"/>
    </location>
</feature>
<feature type="sequence variant" id="VAR_041011" description="In dbSNP:rs35802484." evidence="28">
    <original>P</original>
    <variation>S</variation>
    <location>
        <position position="196"/>
    </location>
</feature>
<feature type="sequence variant" id="VAR_041012" description="In dbSNP:rs34677717." evidence="28">
    <original>P</original>
    <variation>L</variation>
    <location>
        <position position="209"/>
    </location>
</feature>
<feature type="sequence variant" id="VAR_041013" description="In a glioblastoma multiforme sample; somatic mutation; dbSNP:rs371854396." evidence="28">
    <original>P</original>
    <variation>L</variation>
    <location>
        <position position="215"/>
    </location>
</feature>
<feature type="sequence variant" id="VAR_046578" description="In PARK6; dbSNP:rs74315360." evidence="25">
    <original>A</original>
    <variation>D</variation>
    <location>
        <position position="217"/>
    </location>
</feature>
<feature type="sequence variant" id="VAR_046579" description="In dbSNP:rs1303935100." evidence="14">
    <original>E</original>
    <variation>G</variation>
    <location>
        <position position="231"/>
    </location>
</feature>
<feature type="sequence variant" id="VAR_046580" description="In dbSNP:rs1557562082." evidence="14">
    <original>N</original>
    <variation>I</variation>
    <location>
        <position position="235"/>
    </location>
</feature>
<feature type="sequence variant" id="VAR_046581" description="In PARK6; loss of autophosphorylation on S-228 and kinase activation; no effect on interaction with TIMM23; dbSNP:rs573931674." evidence="14 21 63 65">
    <original>E</original>
    <variation>K</variation>
    <location>
        <position position="240"/>
    </location>
</feature>
<feature type="sequence variant" id="VAR_046582" description="In dbSNP:rs370906995." evidence="30">
    <original>T</original>
    <variation>I</variation>
    <location>
        <position position="257"/>
    </location>
</feature>
<feature type="sequence variant" id="VAR_046583" description="In dbSNP:rs1553146419." evidence="14">
    <original>R</original>
    <variation>G</variation>
    <location>
        <position position="263"/>
    </location>
</feature>
<feature type="sequence variant" id="VAR_046584" description="In PARK6; dbSNP:rs372280083." evidence="18 30">
    <original>L</original>
    <variation>V</variation>
    <location>
        <position position="268"/>
    </location>
</feature>
<feature type="sequence variant" id="VAR_046585" description="In PARK6; no effect on interaction with TIMM23; dbSNP:rs28940284." evidence="12 63">
    <original>H</original>
    <variation>Q</variation>
    <location>
        <position position="271"/>
    </location>
</feature>
<feature type="sequence variant" id="VAR_046586" description="In dbSNP:rs548506734." evidence="30">
    <original>R</original>
    <variation>Q</variation>
    <location>
        <position position="276"/>
    </location>
</feature>
<feature type="sequence variant" id="VAR_046587" description="In PARK6; dbSNP:rs74315358." evidence="16">
    <original>R</original>
    <variation>H</variation>
    <location>
        <position position="279"/>
    </location>
</feature>
<feature type="sequence variant" id="VAR_062774" description="In PARK6; dbSNP:rs772510148." evidence="22">
    <original>A</original>
    <variation>T</variation>
    <location>
        <position position="280"/>
    </location>
</feature>
<feature type="sequence variant" id="VAR_046588" description="In dbSNP:rs779060308." evidence="11 30">
    <original>P</original>
    <variation>L</variation>
    <location>
        <position position="296"/>
    </location>
</feature>
<feature type="sequence variant" id="VAR_018993" description="In dbSNP:rs7349186.">
    <original>P</original>
    <variation>L</variation>
    <location>
        <position position="305"/>
    </location>
</feature>
<feature type="sequence variant" id="VAR_018994" description="In PARK6; affects cellular response to stress resulting in increased mitochondrial depolarization under stress conditions compared to wild type; has no effect on autophosphorylation; strongly reduces interaction with PRKN; decreases PRKN and SNCAIP ubiquitination and degradation; decreases Drp1 phosphorylation; loss of ubiquitin phosphorylation; no effect on interaction with TIMM23; dbSNP:rs74315355." evidence="10 19 35 40 61 63 65">
    <original>G</original>
    <variation>D</variation>
    <location>
        <position position="309"/>
    </location>
</feature>
<feature type="sequence variant" id="VAR_046589" description="In PARK6; decreases PRKN and SNCAIP ubiquitination and degradation; slightly decreases Drp1 phosphorylation; dbSNP:rs74315359." evidence="27 33 35 61">
    <original>T</original>
    <variation>M</variation>
    <location>
        <position position="313"/>
    </location>
</feature>
<feature type="sequence variant" id="VAR_046590" description="In dbSNP:rs200949139." evidence="26 30">
    <original>V</original>
    <variation>I</variation>
    <location>
        <position position="317"/>
    </location>
</feature>
<feature type="sequence variant" id="VAR_046591" description="In dbSNP:rs139226733." evidence="14">
    <original>M</original>
    <variation>L</variation>
    <location>
        <position position="318"/>
    </location>
</feature>
<feature type="sequence variant" id="VAR_046592" description="In dbSNP:rs768019187." evidence="30">
    <original>P</original>
    <variation>L</variation>
    <location>
        <position position="322"/>
    </location>
</feature>
<feature type="sequence variant" id="VAR_041014" description="In dbSNP:rs55831733." evidence="14 26 28 30">
    <original>A</original>
    <variation>T</variation>
    <location>
        <position position="339"/>
    </location>
</feature>
<feature type="sequence variant" id="VAR_018995" description="In dbSNP:rs3738136." evidence="9 11 14 17 20 22 28">
    <original>A</original>
    <variation>T</variation>
    <location>
        <position position="340"/>
    </location>
</feature>
<feature type="sequence variant" id="VAR_041015" description="In dbSNP:rs35813094." evidence="28">
    <original>M</original>
    <variation>I</variation>
    <location>
        <position position="341"/>
    </location>
</feature>
<feature type="sequence variant" id="VAR_046593" description="In PARK6; strongly reduces interaction with PRKN; reduced ubiquitination of MIRO1; severely decreased interaction with TIMM23; dbSNP:rs28940285." evidence="12 14 40 43 45 63">
    <original>L</original>
    <variation>P</variation>
    <location>
        <position position="347"/>
    </location>
</feature>
<feature type="sequence variant" id="VAR_046594" evidence="14">
    <original>D</original>
    <variation>H</variation>
    <location>
        <position position="362"/>
    </location>
</feature>
<feature type="sequence variant" id="VAR_062775" description="In PARK6; dbSNP:rs1195888869." evidence="21">
    <original>L</original>
    <variation>P</variation>
    <location>
        <position position="369"/>
    </location>
</feature>
<feature type="sequence variant" id="VAR_041016" description="In dbSNP:rs34203620." evidence="28">
    <original>C</original>
    <variation>F</variation>
    <location>
        <position position="377"/>
    </location>
</feature>
<feature type="sequence variant" id="VAR_046595" description="In dbSNP:rs45515602." evidence="26 30">
    <original>A</original>
    <variation>T</variation>
    <location>
        <position position="383"/>
    </location>
</feature>
<feature type="sequence variant" id="VAR_062776" description="In PARK6; abolishes kinase activity; no effect on interaction with TIMM23." evidence="21 52 63">
    <original>G</original>
    <variation>A</variation>
    <location>
        <position position="386"/>
    </location>
</feature>
<feature type="sequence variant" id="VAR_046596" description="In PARK6; dbSNP:rs1553146806." evidence="15">
    <original>C</original>
    <variation>R</variation>
    <location>
        <position position="388"/>
    </location>
</feature>
<feature type="sequence variant" id="VAR_046597" description="In dbSNP:rs1035071310." evidence="30">
    <original>G</original>
    <variation>V</variation>
    <location>
        <position position="395"/>
    </location>
</feature>
<feature type="sequence variant" id="VAR_062777" description="Found in early-onset Parkinson disease with digenic inheritance; likely pathogenic; the patient also has mutation S-39 in PARK7; decreases PRKN and SNCAIP ubiquitination and degradation; dbSNP:rs119451946." evidence="23 35">
    <original>P</original>
    <variation>L</variation>
    <location>
        <position position="399"/>
    </location>
</feature>
<feature type="sequence variant" id="VAR_062778" description="In PARK6; early-onset; dbSNP:rs556540177." evidence="20">
    <original>R</original>
    <variation>Q</variation>
    <location>
        <position position="407"/>
    </location>
</feature>
<feature type="sequence variant" id="VAR_062779" description="In PARK6; no effect on interaction with TIMM23; dbSNP:rs1553146818." evidence="21 63">
    <original>G</original>
    <variation>V</variation>
    <location>
        <position position="409"/>
    </location>
</feature>
<feature type="sequence variant" id="VAR_046598" description="In dbSNP:rs45478900." evidence="26">
    <original>G</original>
    <variation>S</variation>
    <location>
        <position position="411"/>
    </location>
</feature>
<feature type="sequence variant" id="VAR_046599" description="In PARK6; no effect on interaction with TIMM23; dbSNP:rs1553146822." evidence="12 63">
    <original>E</original>
    <variation>G</variation>
    <location>
        <position position="417"/>
    </location>
</feature>
<feature type="sequence variant" id="VAR_046600" description="In dbSNP:rs554114655." evidence="14">
    <original>P</original>
    <variation>S</variation>
    <location>
        <position position="425"/>
    </location>
</feature>
<feature type="sequence variant" id="VAR_046601" description="May predispose to Parkinson disease development; affects cellular response to stress resulting in increased mitochondrial depolarization under stress conditions compared to wild type; dbSNP:rs74315361." evidence="26">
    <original>Y</original>
    <variation>H</variation>
    <location>
        <position position="431"/>
    </location>
</feature>
<feature type="sequence variant" id="VAR_046602" description="In dbSNP:rs1553146877." evidence="11 30">
    <original>I</original>
    <variation>T</variation>
    <location>
        <position position="442"/>
    </location>
</feature>
<feature type="sequence variant" id="VAR_046603" description="May predispose to Parkinson disease development; affects cellular response to stress resulting in increased mitochondrial depolarization under stress conditions compared to wild type; dbSNP:rs747400197." evidence="26">
    <original>N</original>
    <variation>S</variation>
    <location>
        <position position="451"/>
    </location>
</feature>
<feature type="sequence variant" id="VAR_078935" description="In PARK6." evidence="49">
    <location>
        <begin position="456"/>
        <end position="581"/>
    </location>
</feature>
<feature type="sequence variant" id="VAR_046604" evidence="26">
    <original>L</original>
    <variation>S</variation>
    <location>
        <position position="461"/>
    </location>
</feature>
<feature type="sequence variant" id="VAR_046605" description="In PARK6; dbSNP:rs764328076." evidence="11">
    <original>R</original>
    <variation>H</variation>
    <location>
        <position position="464"/>
    </location>
</feature>
<feature type="sequence variant" id="VAR_046606" description="May predispose to Parkinson disease development; affects cellular response to stress resulting in increased mitochondrial depolarization under stress conditions compared to wild type; dbSNP:rs115477764." evidence="11 14 17 26 30">
    <original>E</original>
    <variation>K</variation>
    <location>
        <position position="476"/>
    </location>
</feature>
<feature type="sequence variant" id="VAR_041017" description="In dbSNP:rs34416410." evidence="28">
    <original>S</original>
    <variation>T</variation>
    <location>
        <position position="477"/>
    </location>
</feature>
<feature type="sequence variant" id="VAR_046607" description="In PARK6; dbSNP:rs1553146903." evidence="14">
    <original>L</original>
    <variation>P</variation>
    <location>
        <position position="489"/>
    </location>
</feature>
<feature type="sequence variant" id="VAR_084338" description="In PARK6; mitochondria are deformed and dysfunctional with decreased mitochondrial membrane potential; shows increased apoptosis; increased oxidative stress; decreased phosphorylation of DNM1L and Drp1; dbSNP:rs34208370." evidence="33 39 61">
    <location>
        <begin position="492"/>
        <end position="581"/>
    </location>
</feature>
<feature type="sequence variant" id="VAR_046608" description="May predispose to Parkinson disease development; affects cellular response to stress resulting in increased mitochondrial depolarization under stress conditions compared to wild type; dbSNP:rs61744200." evidence="26">
    <original>R</original>
    <variation>P</variation>
    <location>
        <position position="501"/>
    </location>
</feature>
<feature type="sequence variant" id="VAR_018996" description="In dbSNP:rs1043424." evidence="9 11 14 17 20 22 28">
    <original>N</original>
    <variation>T</variation>
    <location>
        <position position="521"/>
    </location>
</feature>
<feature type="sequence variant" id="VAR_046609" description="In dbSNP:rs531477772." evidence="11 30">
    <original>D</original>
    <variation>N</variation>
    <location>
        <position position="525"/>
    </location>
</feature>
<feature type="sequence variant" id="VAR_046610" description="In PARK6; loss of autophosphorylation on S-228 and kinase activation; no effect on interaction with TIMM23." evidence="16 63 65">
    <original>Q</original>
    <variation>QQ</variation>
    <location>
        <position position="534"/>
    </location>
</feature>
<feature type="sequence variant" id="VAR_046611" description="In dbSNP:rs771032673." evidence="30">
    <original>A</original>
    <variation>T</variation>
    <location>
        <position position="537"/>
    </location>
</feature>
<feature type="sequence variant" id="VAR_046612" description="May predispose to Parkinson disease development; affects cellular response to stress resulting in increased mitochondrial depolarization under stress conditions compared to wild type; dbSNP:rs1553147052." evidence="26">
    <original>C</original>
    <variation>R</variation>
    <location>
        <position position="575"/>
    </location>
</feature>
<feature type="mutagenesis site" description="In 3EA; impaired ability to localize to the outer mitochondrial membrane." evidence="58">
    <original>EEKQAE</original>
    <variation>AAKQAA</variation>
    <location>
        <begin position="112"/>
        <end position="117"/>
    </location>
</feature>
<feature type="mutagenesis site" description="Under depolarizing conditions, it results in loss of interaction with TOMM20 and fails to support PINK1-TOM-TIM23 complex assembly and mitophagy activation." evidence="64">
    <original>I</original>
    <variation>E</variation>
    <location>
        <position position="131"/>
    </location>
</feature>
<feature type="mutagenesis site" description="Abolishes MFN2 phosphorylation and interaction with PRKN; when associated with Ala-362 and Ala-384." evidence="46">
    <original>K</original>
    <variation>A</variation>
    <location>
        <position position="219"/>
    </location>
</feature>
<feature type="mutagenesis site" description="Loss of enzyme activity and impaired localization of PRKN to mitochondria; when associated with A-362 and A-384." evidence="34 60">
    <original>K</original>
    <variation>M</variation>
    <location>
        <position position="219"/>
    </location>
</feature>
<feature type="mutagenesis site" description="Abolishes MFN2 phosphorylation and interaction with PRKN; when associated with A-219 and A-384. Loss of enzyme activity and impaired localization of PRKN to mitochondria; when associated with M-219 and A-384." evidence="34 46 60">
    <original>D</original>
    <variation>A</variation>
    <location>
        <position position="362"/>
    </location>
</feature>
<feature type="mutagenesis site" description="Abolishes MFN2 phosphorylation and interaction with PRKN; when associated with A-219 and A-362. Loss of enzyme activity and impaired localization of PRKN to mitochondria; when associated with M-219 and A-362." evidence="34 46 60">
    <original>D</original>
    <variation>A</variation>
    <location>
        <position position="384"/>
    </location>
</feature>
<feature type="mutagenesis site" description="Loss of activity. Abolishes Drp1 phosphorylation. No effect on localization to mitochondria." evidence="61">
    <original>D</original>
    <variation>N</variation>
    <location>
        <position position="384"/>
    </location>
</feature>
<feature type="mutagenesis site" description="Under depolarizing conditions, it results in severely reduced autophosphorylation on S-228 and loss of kinase activation." evidence="65">
    <original>L</original>
    <variation>A</variation>
    <location>
        <position position="532"/>
    </location>
</feature>
<feature type="mutagenesis site" description="Under depolarizing conditions, it results in loss of interaction with TOMM20 and fails to support PINK1-TOM-TIM23 complex assembly and mitophagy activation." evidence="64">
    <original>A</original>
    <variation>E</variation>
    <location>
        <position position="536"/>
    </location>
</feature>
<feature type="mutagenesis site" description="Under depolarizing conditions, it fails to support PINK1-TOM-TIM23 complex assembly and mitophagy activation." evidence="64">
    <original>A</original>
    <variation>S</variation>
    <location>
        <position position="536"/>
    </location>
</feature>
<feature type="mutagenesis site" description="Under depolarizing conditions, it results in severely reduced autophosphorylation on S-228 and loss of kinase activation." evidence="65">
    <original>L</original>
    <variation>A</variation>
    <location>
        <position position="539"/>
    </location>
</feature>
<feature type="mutagenesis site" description="Under depolarizing conditions, does not affect autophosphorylation on S-228 and kinase activation." evidence="65">
    <original>L</original>
    <variation>A</variation>
    <location>
        <position position="540"/>
    </location>
</feature>
<feature type="mutagenesis site" description="Under depolarizing conditions, it results in loss of interaction with TOMM20 and fails to support PINK1-TOM-TIM23 complex assembly and mitophagy activation." evidence="64">
    <original>L</original>
    <variation>K</variation>
    <location>
        <position position="540"/>
    </location>
</feature>
<feature type="mutagenesis site" description="No effect on interaction with TOMM20 and mitophagy activation under depolarizing conditions." evidence="64">
    <original>R</original>
    <variation>D</variation>
    <location>
        <position position="543"/>
    </location>
</feature>
<feature type="mutagenesis site" description="Under depolarizing conditions, it fails to support PINK1-TOM-TIM23 complex assembly and mitophagy activation." evidence="64">
    <original>R</original>
    <variation>G</variation>
    <location>
        <position position="543"/>
    </location>
</feature>
<feature type="sequence conflict" description="In Ref. 5; AAH28215." evidence="67" ref="5">
    <original>P</original>
    <variation>A</variation>
    <location>
        <position position="209"/>
    </location>
</feature>
<feature type="sequence conflict" description="In Ref. 3; BAC11484." evidence="67" ref="3">
    <original>S</original>
    <variation>P</variation>
    <location>
        <position position="419"/>
    </location>
</feature>
<evidence type="ECO:0000250" key="1">
    <source>
        <dbReference type="UniProtKB" id="Q02750"/>
    </source>
</evidence>
<evidence type="ECO:0000250" key="2">
    <source>
        <dbReference type="UniProtKB" id="Q99MQ3"/>
    </source>
</evidence>
<evidence type="ECO:0000255" key="3"/>
<evidence type="ECO:0000255" key="4">
    <source>
        <dbReference type="PROSITE-ProRule" id="PRU00159"/>
    </source>
</evidence>
<evidence type="ECO:0000255" key="5">
    <source>
        <dbReference type="PROSITE-ProRule" id="PRU10027"/>
    </source>
</evidence>
<evidence type="ECO:0000256" key="6">
    <source>
        <dbReference type="SAM" id="MobiDB-lite"/>
    </source>
</evidence>
<evidence type="ECO:0000269" key="7">
    <source>
    </source>
</evidence>
<evidence type="ECO:0000269" key="8">
    <source>
    </source>
</evidence>
<evidence type="ECO:0000269" key="9">
    <source>
    </source>
</evidence>
<evidence type="ECO:0000269" key="10">
    <source>
    </source>
</evidence>
<evidence type="ECO:0000269" key="11">
    <source>
    </source>
</evidence>
<evidence type="ECO:0000269" key="12">
    <source>
    </source>
</evidence>
<evidence type="ECO:0000269" key="13">
    <source>
    </source>
</evidence>
<evidence type="ECO:0000269" key="14">
    <source>
    </source>
</evidence>
<evidence type="ECO:0000269" key="15">
    <source>
    </source>
</evidence>
<evidence type="ECO:0000269" key="16">
    <source>
    </source>
</evidence>
<evidence type="ECO:0000269" key="17">
    <source>
    </source>
</evidence>
<evidence type="ECO:0000269" key="18">
    <source>
    </source>
</evidence>
<evidence type="ECO:0000269" key="19">
    <source>
    </source>
</evidence>
<evidence type="ECO:0000269" key="20">
    <source>
    </source>
</evidence>
<evidence type="ECO:0000269" key="21">
    <source>
    </source>
</evidence>
<evidence type="ECO:0000269" key="22">
    <source>
    </source>
</evidence>
<evidence type="ECO:0000269" key="23">
    <source>
    </source>
</evidence>
<evidence type="ECO:0000269" key="24">
    <source>
    </source>
</evidence>
<evidence type="ECO:0000269" key="25">
    <source>
    </source>
</evidence>
<evidence type="ECO:0000269" key="26">
    <source>
    </source>
</evidence>
<evidence type="ECO:0000269" key="27">
    <source>
    </source>
</evidence>
<evidence type="ECO:0000269" key="28">
    <source>
    </source>
</evidence>
<evidence type="ECO:0000269" key="29">
    <source>
    </source>
</evidence>
<evidence type="ECO:0000269" key="30">
    <source>
    </source>
</evidence>
<evidence type="ECO:0000269" key="31">
    <source>
    </source>
</evidence>
<evidence type="ECO:0000269" key="32">
    <source>
    </source>
</evidence>
<evidence type="ECO:0000269" key="33">
    <source>
    </source>
</evidence>
<evidence type="ECO:0000269" key="34">
    <source>
    </source>
</evidence>
<evidence type="ECO:0000269" key="35">
    <source>
    </source>
</evidence>
<evidence type="ECO:0000269" key="36">
    <source>
    </source>
</evidence>
<evidence type="ECO:0000269" key="37">
    <source>
    </source>
</evidence>
<evidence type="ECO:0000269" key="38">
    <source>
    </source>
</evidence>
<evidence type="ECO:0000269" key="39">
    <source>
    </source>
</evidence>
<evidence type="ECO:0000269" key="40">
    <source>
    </source>
</evidence>
<evidence type="ECO:0000269" key="41">
    <source>
    </source>
</evidence>
<evidence type="ECO:0000269" key="42">
    <source>
    </source>
</evidence>
<evidence type="ECO:0000269" key="43">
    <source>
    </source>
</evidence>
<evidence type="ECO:0000269" key="44">
    <source>
    </source>
</evidence>
<evidence type="ECO:0000269" key="45">
    <source>
    </source>
</evidence>
<evidence type="ECO:0000269" key="46">
    <source>
    </source>
</evidence>
<evidence type="ECO:0000269" key="47">
    <source>
    </source>
</evidence>
<evidence type="ECO:0000269" key="48">
    <source>
    </source>
</evidence>
<evidence type="ECO:0000269" key="49">
    <source>
    </source>
</evidence>
<evidence type="ECO:0000269" key="50">
    <source>
    </source>
</evidence>
<evidence type="ECO:0000269" key="51">
    <source>
    </source>
</evidence>
<evidence type="ECO:0000269" key="52">
    <source>
    </source>
</evidence>
<evidence type="ECO:0000269" key="53">
    <source>
    </source>
</evidence>
<evidence type="ECO:0000269" key="54">
    <source>
    </source>
</evidence>
<evidence type="ECO:0000269" key="55">
    <source>
    </source>
</evidence>
<evidence type="ECO:0000269" key="56">
    <source>
    </source>
</evidence>
<evidence type="ECO:0000269" key="57">
    <source>
    </source>
</evidence>
<evidence type="ECO:0000269" key="58">
    <source>
    </source>
</evidence>
<evidence type="ECO:0000269" key="59">
    <source>
    </source>
</evidence>
<evidence type="ECO:0000269" key="60">
    <source>
    </source>
</evidence>
<evidence type="ECO:0000269" key="61">
    <source>
    </source>
</evidence>
<evidence type="ECO:0000269" key="62">
    <source>
    </source>
</evidence>
<evidence type="ECO:0000269" key="63">
    <source>
    </source>
</evidence>
<evidence type="ECO:0000269" key="64">
    <source>
    </source>
</evidence>
<evidence type="ECO:0000269" key="65">
    <source>
    </source>
</evidence>
<evidence type="ECO:0000303" key="66">
    <source>
    </source>
</evidence>
<evidence type="ECO:0000305" key="67"/>
<evidence type="ECO:0000312" key="68">
    <source>
        <dbReference type="EMBL" id="AAH09534.1"/>
    </source>
</evidence>
<evidence type="ECO:0000312" key="69">
    <source>
        <dbReference type="EMBL" id="AAH28215.1"/>
    </source>
</evidence>
<evidence type="ECO:0000312" key="70">
    <source>
        <dbReference type="EMBL" id="AAK28062.1"/>
    </source>
</evidence>
<evidence type="ECO:0000312" key="71">
    <source>
        <dbReference type="EMBL" id="BAC11484.1"/>
    </source>
</evidence>
<gene>
    <name type="primary">PINK1</name>
</gene>
<dbReference type="EC" id="2.7.11.1" evidence="34 50 51 52 61"/>
<dbReference type="EMBL" id="AB053323">
    <property type="protein sequence ID" value="BAB55647.1"/>
    <property type="molecule type" value="mRNA"/>
</dbReference>
<dbReference type="EMBL" id="AF316873">
    <property type="protein sequence ID" value="AAK28062.1"/>
    <property type="molecule type" value="mRNA"/>
</dbReference>
<dbReference type="EMBL" id="AK075225">
    <property type="protein sequence ID" value="BAC11484.1"/>
    <property type="molecule type" value="mRNA"/>
</dbReference>
<dbReference type="EMBL" id="AL391357">
    <property type="status" value="NOT_ANNOTATED_CDS"/>
    <property type="molecule type" value="Genomic_DNA"/>
</dbReference>
<dbReference type="EMBL" id="BC009534">
    <property type="protein sequence ID" value="AAH09534.1"/>
    <property type="molecule type" value="mRNA"/>
</dbReference>
<dbReference type="EMBL" id="BC028215">
    <property type="protein sequence ID" value="AAH28215.1"/>
    <property type="molecule type" value="mRNA"/>
</dbReference>
<dbReference type="CCDS" id="CCDS211.1">
    <molecule id="Q9BXM7-1"/>
</dbReference>
<dbReference type="RefSeq" id="NP_115785.1">
    <molecule id="Q9BXM7-1"/>
    <property type="nucleotide sequence ID" value="NM_032409.3"/>
</dbReference>
<dbReference type="PDB" id="9EIH">
    <property type="method" value="EM"/>
    <property type="resolution" value="3.10 A"/>
    <property type="chains" value="A/B=1-581"/>
</dbReference>
<dbReference type="PDB" id="9EII">
    <property type="method" value="EM"/>
    <property type="resolution" value="2.75 A"/>
    <property type="chains" value="B=1-581"/>
</dbReference>
<dbReference type="PDB" id="9EIJ">
    <property type="method" value="EM"/>
    <property type="resolution" value="3.30 A"/>
    <property type="chains" value="B=1-581"/>
</dbReference>
<dbReference type="PDBsum" id="9EIH"/>
<dbReference type="PDBsum" id="9EII"/>
<dbReference type="PDBsum" id="9EIJ"/>
<dbReference type="EMDB" id="EMD-48083"/>
<dbReference type="EMDB" id="EMD-48084"/>
<dbReference type="EMDB" id="EMD-48085"/>
<dbReference type="SMR" id="Q9BXM7"/>
<dbReference type="BioGRID" id="122376">
    <property type="interactions" value="695"/>
</dbReference>
<dbReference type="CORUM" id="Q9BXM7"/>
<dbReference type="DIP" id="DIP-29427N"/>
<dbReference type="FunCoup" id="Q9BXM7">
    <property type="interactions" value="1190"/>
</dbReference>
<dbReference type="IntAct" id="Q9BXM7">
    <property type="interactions" value="177"/>
</dbReference>
<dbReference type="MINT" id="Q9BXM7"/>
<dbReference type="STRING" id="9606.ENSP00000364204"/>
<dbReference type="ChEMBL" id="CHEMBL3337330"/>
<dbReference type="TCDB" id="8.A.104.1.16">
    <property type="family name" value="the 5'-amp-activated protein kinase (ampk) family"/>
</dbReference>
<dbReference type="CarbonylDB" id="Q9BXM7"/>
<dbReference type="GlyGen" id="Q9BXM7">
    <property type="glycosylation" value="2 sites, 1 O-linked glycan (2 sites)"/>
</dbReference>
<dbReference type="iPTMnet" id="Q9BXM7"/>
<dbReference type="PhosphoSitePlus" id="Q9BXM7"/>
<dbReference type="BioMuta" id="PINK1"/>
<dbReference type="DMDM" id="48428484"/>
<dbReference type="MassIVE" id="Q9BXM7"/>
<dbReference type="PaxDb" id="9606-ENSP00000364204"/>
<dbReference type="PeptideAtlas" id="Q9BXM7"/>
<dbReference type="ProteomicsDB" id="79455">
    <molecule id="Q9BXM7-1"/>
</dbReference>
<dbReference type="ProteomicsDB" id="79456">
    <molecule id="Q9BXM7-2"/>
</dbReference>
<dbReference type="ABCD" id="Q9BXM7">
    <property type="antibodies" value="4 sequenced antibodies"/>
</dbReference>
<dbReference type="Antibodypedia" id="1105">
    <property type="antibodies" value="806 antibodies from 48 providers"/>
</dbReference>
<dbReference type="DNASU" id="65018"/>
<dbReference type="Ensembl" id="ENST00000321556.5">
    <molecule id="Q9BXM7-1"/>
    <property type="protein sequence ID" value="ENSP00000364204.3"/>
    <property type="gene ID" value="ENSG00000158828.8"/>
</dbReference>
<dbReference type="GeneID" id="65018"/>
<dbReference type="KEGG" id="hsa:65018"/>
<dbReference type="MANE-Select" id="ENST00000321556.5">
    <property type="protein sequence ID" value="ENSP00000364204.3"/>
    <property type="RefSeq nucleotide sequence ID" value="NM_032409.3"/>
    <property type="RefSeq protein sequence ID" value="NP_115785.1"/>
</dbReference>
<dbReference type="UCSC" id="uc001bdm.3">
    <molecule id="Q9BXM7-1"/>
    <property type="organism name" value="human"/>
</dbReference>
<dbReference type="AGR" id="HGNC:14581"/>
<dbReference type="CTD" id="65018"/>
<dbReference type="DisGeNET" id="65018"/>
<dbReference type="GeneCards" id="PINK1"/>
<dbReference type="GeneReviews" id="PINK1"/>
<dbReference type="HGNC" id="HGNC:14581">
    <property type="gene designation" value="PINK1"/>
</dbReference>
<dbReference type="HPA" id="ENSG00000158828">
    <property type="expression patterns" value="Tissue enhanced (skeletal muscle, tongue)"/>
</dbReference>
<dbReference type="MalaCards" id="PINK1"/>
<dbReference type="MIM" id="168600">
    <property type="type" value="phenotype"/>
</dbReference>
<dbReference type="MIM" id="605909">
    <property type="type" value="phenotype"/>
</dbReference>
<dbReference type="MIM" id="608309">
    <property type="type" value="gene"/>
</dbReference>
<dbReference type="neXtProt" id="NX_Q9BXM7"/>
<dbReference type="OpenTargets" id="ENSG00000158828"/>
<dbReference type="Orphanet" id="2828">
    <property type="disease" value="Young-onset Parkinson disease"/>
</dbReference>
<dbReference type="PharmGKB" id="PA33325"/>
<dbReference type="VEuPathDB" id="HostDB:ENSG00000158828"/>
<dbReference type="eggNOG" id="KOG4158">
    <property type="taxonomic scope" value="Eukaryota"/>
</dbReference>
<dbReference type="GeneTree" id="ENSGT00390000001206"/>
<dbReference type="HOGENOM" id="CLU_022208_1_0_1"/>
<dbReference type="InParanoid" id="Q9BXM7"/>
<dbReference type="OMA" id="TCCSLRN"/>
<dbReference type="OrthoDB" id="1405469at2759"/>
<dbReference type="PAN-GO" id="Q9BXM7">
    <property type="GO annotations" value="6 GO annotations based on evolutionary models"/>
</dbReference>
<dbReference type="PhylomeDB" id="Q9BXM7"/>
<dbReference type="TreeFam" id="TF313183"/>
<dbReference type="PathwayCommons" id="Q9BXM7"/>
<dbReference type="Reactome" id="R-HSA-5205685">
    <property type="pathway name" value="PINK1-PRKN Mediated Mitophagy"/>
</dbReference>
<dbReference type="Reactome" id="R-HSA-9614657">
    <property type="pathway name" value="FOXO-mediated transcription of cell death genes"/>
</dbReference>
<dbReference type="SignaLink" id="Q9BXM7"/>
<dbReference type="SIGNOR" id="Q9BXM7"/>
<dbReference type="BioGRID-ORCS" id="65018">
    <property type="hits" value="17 hits in 1195 CRISPR screens"/>
</dbReference>
<dbReference type="ChiTaRS" id="PINK1">
    <property type="organism name" value="human"/>
</dbReference>
<dbReference type="GeneWiki" id="PINK1"/>
<dbReference type="GenomeRNAi" id="65018"/>
<dbReference type="Pharos" id="Q9BXM7">
    <property type="development level" value="Tbio"/>
</dbReference>
<dbReference type="PRO" id="PR:Q9BXM7"/>
<dbReference type="Proteomes" id="UP000005640">
    <property type="component" value="Chromosome 1"/>
</dbReference>
<dbReference type="RNAct" id="Q9BXM7">
    <property type="molecule type" value="protein"/>
</dbReference>
<dbReference type="Bgee" id="ENSG00000158828">
    <property type="expression patterns" value="Expressed in tendon of biceps brachii and 210 other cell types or tissues"/>
</dbReference>
<dbReference type="GO" id="GO:0097449">
    <property type="term" value="C:astrocyte projection"/>
    <property type="evidence" value="ECO:0000314"/>
    <property type="project" value="ParkinsonsUK-UCL"/>
</dbReference>
<dbReference type="GO" id="GO:0030424">
    <property type="term" value="C:axon"/>
    <property type="evidence" value="ECO:0000314"/>
    <property type="project" value="ParkinsonsUK-UCL"/>
</dbReference>
<dbReference type="GO" id="GO:0044297">
    <property type="term" value="C:cell body"/>
    <property type="evidence" value="ECO:0000314"/>
    <property type="project" value="ParkinsonsUK-UCL"/>
</dbReference>
<dbReference type="GO" id="GO:0000785">
    <property type="term" value="C:chromatin"/>
    <property type="evidence" value="ECO:0000314"/>
    <property type="project" value="ParkinsonsUK-UCL"/>
</dbReference>
<dbReference type="GO" id="GO:0005737">
    <property type="term" value="C:cytoplasm"/>
    <property type="evidence" value="ECO:0000314"/>
    <property type="project" value="ParkinsonsUK-UCL"/>
</dbReference>
<dbReference type="GO" id="GO:0005856">
    <property type="term" value="C:cytoskeleton"/>
    <property type="evidence" value="ECO:0000314"/>
    <property type="project" value="ParkinsonsUK-UCL"/>
</dbReference>
<dbReference type="GO" id="GO:0005829">
    <property type="term" value="C:cytosol"/>
    <property type="evidence" value="ECO:0000314"/>
    <property type="project" value="UniProtKB"/>
</dbReference>
<dbReference type="GO" id="GO:0005783">
    <property type="term" value="C:endoplasmic reticulum"/>
    <property type="evidence" value="ECO:0000314"/>
    <property type="project" value="UniProtKB"/>
</dbReference>
<dbReference type="GO" id="GO:0030426">
    <property type="term" value="C:growth cone"/>
    <property type="evidence" value="ECO:0007669"/>
    <property type="project" value="Ensembl"/>
</dbReference>
<dbReference type="GO" id="GO:0097413">
    <property type="term" value="C:Lewy body"/>
    <property type="evidence" value="ECO:0000304"/>
    <property type="project" value="ParkinsonsUK-UCL"/>
</dbReference>
<dbReference type="GO" id="GO:0016020">
    <property type="term" value="C:membrane"/>
    <property type="evidence" value="ECO:0000314"/>
    <property type="project" value="ParkinsonsUK-UCL"/>
</dbReference>
<dbReference type="GO" id="GO:0005743">
    <property type="term" value="C:mitochondrial inner membrane"/>
    <property type="evidence" value="ECO:0000314"/>
    <property type="project" value="ParkinsonsUK-UCL"/>
</dbReference>
<dbReference type="GO" id="GO:0005758">
    <property type="term" value="C:mitochondrial intermembrane space"/>
    <property type="evidence" value="ECO:0000314"/>
    <property type="project" value="ParkinsonsUK-UCL"/>
</dbReference>
<dbReference type="GO" id="GO:0005741">
    <property type="term" value="C:mitochondrial outer membrane"/>
    <property type="evidence" value="ECO:0000314"/>
    <property type="project" value="ParkinsonsUK-UCL"/>
</dbReference>
<dbReference type="GO" id="GO:0005739">
    <property type="term" value="C:mitochondrion"/>
    <property type="evidence" value="ECO:0000314"/>
    <property type="project" value="UniProtKB"/>
</dbReference>
<dbReference type="GO" id="GO:0005634">
    <property type="term" value="C:nucleus"/>
    <property type="evidence" value="ECO:0000314"/>
    <property type="project" value="ParkinsonsUK-UCL"/>
</dbReference>
<dbReference type="GO" id="GO:0048471">
    <property type="term" value="C:perinuclear region of cytoplasm"/>
    <property type="evidence" value="ECO:0000314"/>
    <property type="project" value="ParkinsonsUK-UCL"/>
</dbReference>
<dbReference type="GO" id="GO:0005524">
    <property type="term" value="F:ATP binding"/>
    <property type="evidence" value="ECO:0000314"/>
    <property type="project" value="UniProtKB"/>
</dbReference>
<dbReference type="GO" id="GO:0055131">
    <property type="term" value="F:C3HC4-type RING finger domain binding"/>
    <property type="evidence" value="ECO:0000353"/>
    <property type="project" value="BHF-UCL"/>
</dbReference>
<dbReference type="GO" id="GO:0016301">
    <property type="term" value="F:kinase activity"/>
    <property type="evidence" value="ECO:0000314"/>
    <property type="project" value="MGI"/>
</dbReference>
<dbReference type="GO" id="GO:0019900">
    <property type="term" value="F:kinase binding"/>
    <property type="evidence" value="ECO:0000353"/>
    <property type="project" value="ParkinsonsUK-UCL"/>
</dbReference>
<dbReference type="GO" id="GO:0000287">
    <property type="term" value="F:magnesium ion binding"/>
    <property type="evidence" value="ECO:0000314"/>
    <property type="project" value="UniProtKB"/>
</dbReference>
<dbReference type="GO" id="GO:0016504">
    <property type="term" value="F:peptidase activator activity"/>
    <property type="evidence" value="ECO:0000304"/>
    <property type="project" value="ParkinsonsUK-UCL"/>
</dbReference>
<dbReference type="GO" id="GO:0002020">
    <property type="term" value="F:protease binding"/>
    <property type="evidence" value="ECO:0000353"/>
    <property type="project" value="ParkinsonsUK-UCL"/>
</dbReference>
<dbReference type="GO" id="GO:0004672">
    <property type="term" value="F:protein kinase activity"/>
    <property type="evidence" value="ECO:0000315"/>
    <property type="project" value="UniProtKB"/>
</dbReference>
<dbReference type="GO" id="GO:0043422">
    <property type="term" value="F:protein kinase B binding"/>
    <property type="evidence" value="ECO:0000314"/>
    <property type="project" value="ParkinsonsUK-UCL"/>
</dbReference>
<dbReference type="GO" id="GO:0106310">
    <property type="term" value="F:protein serine kinase activity"/>
    <property type="evidence" value="ECO:0000315"/>
    <property type="project" value="UniProtKB"/>
</dbReference>
<dbReference type="GO" id="GO:0004674">
    <property type="term" value="F:protein serine/threonine kinase activity"/>
    <property type="evidence" value="ECO:0000314"/>
    <property type="project" value="UniProtKB"/>
</dbReference>
<dbReference type="GO" id="GO:0044877">
    <property type="term" value="F:protein-containing complex binding"/>
    <property type="evidence" value="ECO:0000315"/>
    <property type="project" value="ParkinsonsUK-UCL"/>
</dbReference>
<dbReference type="GO" id="GO:0031625">
    <property type="term" value="F:ubiquitin protein ligase binding"/>
    <property type="evidence" value="ECO:0000353"/>
    <property type="project" value="UniProtKB"/>
</dbReference>
<dbReference type="GO" id="GO:0000422">
    <property type="term" value="P:autophagy of mitochondrion"/>
    <property type="evidence" value="ECO:0000315"/>
    <property type="project" value="UniProtKB"/>
</dbReference>
<dbReference type="GO" id="GO:1904881">
    <property type="term" value="P:cellular response to hydrogen sulfide"/>
    <property type="evidence" value="ECO:0007669"/>
    <property type="project" value="Ensembl"/>
</dbReference>
<dbReference type="GO" id="GO:0071456">
    <property type="term" value="P:cellular response to hypoxia"/>
    <property type="evidence" value="ECO:0000315"/>
    <property type="project" value="ParkinsonsUK-UCL"/>
</dbReference>
<dbReference type="GO" id="GO:0034599">
    <property type="term" value="P:cellular response to oxidative stress"/>
    <property type="evidence" value="ECO:0000315"/>
    <property type="project" value="ParkinsonsUK-UCL"/>
</dbReference>
<dbReference type="GO" id="GO:0097237">
    <property type="term" value="P:cellular response to toxic substance"/>
    <property type="evidence" value="ECO:0000304"/>
    <property type="project" value="ParkinsonsUK-UCL"/>
</dbReference>
<dbReference type="GO" id="GO:0014046">
    <property type="term" value="P:dopamine secretion"/>
    <property type="evidence" value="ECO:0007669"/>
    <property type="project" value="Ensembl"/>
</dbReference>
<dbReference type="GO" id="GO:0072655">
    <property type="term" value="P:establishment of protein localization to mitochondrion"/>
    <property type="evidence" value="ECO:0000315"/>
    <property type="project" value="UniProtKB"/>
</dbReference>
<dbReference type="GO" id="GO:0030097">
    <property type="term" value="P:hemopoiesis"/>
    <property type="evidence" value="ECO:0000316"/>
    <property type="project" value="ARUK-UCL"/>
</dbReference>
<dbReference type="GO" id="GO:0035556">
    <property type="term" value="P:intracellular signal transduction"/>
    <property type="evidence" value="ECO:0000314"/>
    <property type="project" value="UniProtKB"/>
</dbReference>
<dbReference type="GO" id="GO:0016236">
    <property type="term" value="P:macroautophagy"/>
    <property type="evidence" value="ECO:0000304"/>
    <property type="project" value="Reactome"/>
</dbReference>
<dbReference type="GO" id="GO:0072656">
    <property type="term" value="P:maintenance of protein location in mitochondrion"/>
    <property type="evidence" value="ECO:0000315"/>
    <property type="project" value="ParkinsonsUK-UCL"/>
</dbReference>
<dbReference type="GO" id="GO:0007005">
    <property type="term" value="P:mitochondrion organization"/>
    <property type="evidence" value="ECO:0000315"/>
    <property type="project" value="ParkinsonsUK-UCL"/>
</dbReference>
<dbReference type="GO" id="GO:0099074">
    <property type="term" value="P:mitochondrion to lysosome vesicle-mediated transport"/>
    <property type="evidence" value="ECO:0000315"/>
    <property type="project" value="ParkinsonsUK-UCL"/>
</dbReference>
<dbReference type="GO" id="GO:0000423">
    <property type="term" value="P:mitophagy"/>
    <property type="evidence" value="ECO:0000314"/>
    <property type="project" value="UniProt"/>
</dbReference>
<dbReference type="GO" id="GO:1902902">
    <property type="term" value="P:negative regulation of autophagosome assembly"/>
    <property type="evidence" value="ECO:0000315"/>
    <property type="project" value="ParkinsonsUK-UCL"/>
</dbReference>
<dbReference type="GO" id="GO:0010629">
    <property type="term" value="P:negative regulation of gene expression"/>
    <property type="evidence" value="ECO:0000250"/>
    <property type="project" value="ParkinsonsUK-UCL"/>
</dbReference>
<dbReference type="GO" id="GO:1903384">
    <property type="term" value="P:negative regulation of hydrogen peroxide-induced neuron intrinsic apoptotic signaling pathway"/>
    <property type="evidence" value="ECO:0000314"/>
    <property type="project" value="ParkinsonsUK-UCL"/>
</dbReference>
<dbReference type="GO" id="GO:1903298">
    <property type="term" value="P:negative regulation of hypoxia-induced intrinsic apoptotic signaling pathway"/>
    <property type="evidence" value="ECO:0007669"/>
    <property type="project" value="Ensembl"/>
</dbReference>
<dbReference type="GO" id="GO:2001243">
    <property type="term" value="P:negative regulation of intrinsic apoptotic signaling pathway"/>
    <property type="evidence" value="ECO:0000314"/>
    <property type="project" value="UniProtKB"/>
</dbReference>
<dbReference type="GO" id="GO:1903751">
    <property type="term" value="P:negative regulation of intrinsic apoptotic signaling pathway in response to hydrogen peroxide"/>
    <property type="evidence" value="ECO:0000314"/>
    <property type="project" value="ParkinsonsUK-UCL"/>
</dbReference>
<dbReference type="GO" id="GO:0046329">
    <property type="term" value="P:negative regulation of JNK cascade"/>
    <property type="evidence" value="ECO:0000304"/>
    <property type="project" value="ParkinsonsUK-UCL"/>
</dbReference>
<dbReference type="GO" id="GO:0016242">
    <property type="term" value="P:negative regulation of macroautophagy"/>
    <property type="evidence" value="ECO:0000315"/>
    <property type="project" value="ParkinsonsUK-UCL"/>
</dbReference>
<dbReference type="GO" id="GO:0090258">
    <property type="term" value="P:negative regulation of mitochondrial fission"/>
    <property type="evidence" value="ECO:0000315"/>
    <property type="project" value="ParkinsonsUK-UCL"/>
</dbReference>
<dbReference type="GO" id="GO:1901525">
    <property type="term" value="P:negative regulation of mitophagy"/>
    <property type="evidence" value="ECO:0000315"/>
    <property type="project" value="ParkinsonsUK-UCL"/>
</dbReference>
<dbReference type="GO" id="GO:0043524">
    <property type="term" value="P:negative regulation of neuron apoptotic process"/>
    <property type="evidence" value="ECO:0000315"/>
    <property type="project" value="ParkinsonsUK-UCL"/>
</dbReference>
<dbReference type="GO" id="GO:1903377">
    <property type="term" value="P:negative regulation of oxidative stress-induced neuron intrinsic apoptotic signaling pathway"/>
    <property type="evidence" value="ECO:0000314"/>
    <property type="project" value="ParkinsonsUK-UCL"/>
</dbReference>
<dbReference type="GO" id="GO:2000378">
    <property type="term" value="P:negative regulation of reactive oxygen species metabolic process"/>
    <property type="evidence" value="ECO:0000315"/>
    <property type="project" value="ParkinsonsUK-UCL"/>
</dbReference>
<dbReference type="GO" id="GO:2001171">
    <property type="term" value="P:positive regulation of ATP biosynthetic process"/>
    <property type="evidence" value="ECO:0000304"/>
    <property type="project" value="ParkinsonsUK-UCL"/>
</dbReference>
<dbReference type="GO" id="GO:0043123">
    <property type="term" value="P:positive regulation of canonical NF-kappaB signal transduction"/>
    <property type="evidence" value="ECO:0000314"/>
    <property type="project" value="BHF-UCL"/>
</dbReference>
<dbReference type="GO" id="GO:0030335">
    <property type="term" value="P:positive regulation of cell migration"/>
    <property type="evidence" value="ECO:0000315"/>
    <property type="project" value="ParkinsonsUK-UCL"/>
</dbReference>
<dbReference type="GO" id="GO:1903852">
    <property type="term" value="P:positive regulation of cristae formation"/>
    <property type="evidence" value="ECO:0000315"/>
    <property type="project" value="ParkinsonsUK-UCL"/>
</dbReference>
<dbReference type="GO" id="GO:0033603">
    <property type="term" value="P:positive regulation of dopamine secretion"/>
    <property type="evidence" value="ECO:0007669"/>
    <property type="project" value="Ensembl"/>
</dbReference>
<dbReference type="GO" id="GO:1904544">
    <property type="term" value="P:positive regulation of free ubiquitin chain polymerization"/>
    <property type="evidence" value="ECO:0000250"/>
    <property type="project" value="ParkinsonsUK-UCL"/>
</dbReference>
<dbReference type="GO" id="GO:0016239">
    <property type="term" value="P:positive regulation of macroautophagy"/>
    <property type="evidence" value="ECO:0000315"/>
    <property type="project" value="ParkinsonsUK-UCL"/>
</dbReference>
<dbReference type="GO" id="GO:1902958">
    <property type="term" value="P:positive regulation of mitochondrial electron transport, NADH to ubiquinone"/>
    <property type="evidence" value="ECO:0000304"/>
    <property type="project" value="ParkinsonsUK-UCL"/>
</dbReference>
<dbReference type="GO" id="GO:0090141">
    <property type="term" value="P:positive regulation of mitochondrial fission"/>
    <property type="evidence" value="ECO:0000318"/>
    <property type="project" value="GO_Central"/>
</dbReference>
<dbReference type="GO" id="GO:0051897">
    <property type="term" value="P:positive regulation of phosphatidylinositol 3-kinase/protein kinase B signal transduction"/>
    <property type="evidence" value="ECO:0000314"/>
    <property type="project" value="ParkinsonsUK-UCL"/>
</dbReference>
<dbReference type="GO" id="GO:1903955">
    <property type="term" value="P:positive regulation of protein targeting to mitochondrion"/>
    <property type="evidence" value="ECO:0007001"/>
    <property type="project" value="ParkinsonsUK-UCL"/>
</dbReference>
<dbReference type="GO" id="GO:0031398">
    <property type="term" value="P:positive regulation of protein ubiquitination"/>
    <property type="evidence" value="ECO:0000250"/>
    <property type="project" value="ParkinsonsUK-UCL"/>
</dbReference>
<dbReference type="GO" id="GO:0090200">
    <property type="term" value="P:positive regulation of release of cytochrome c from mitochondria"/>
    <property type="evidence" value="ECO:0000315"/>
    <property type="project" value="BHF-UCL"/>
</dbReference>
<dbReference type="GO" id="GO:0032226">
    <property type="term" value="P:positive regulation of synaptic transmission, dopaminergic"/>
    <property type="evidence" value="ECO:0007669"/>
    <property type="project" value="Ensembl"/>
</dbReference>
<dbReference type="GO" id="GO:0045944">
    <property type="term" value="P:positive regulation of transcription by RNA polymerase II"/>
    <property type="evidence" value="ECO:0007669"/>
    <property type="project" value="Ensembl"/>
</dbReference>
<dbReference type="GO" id="GO:0045727">
    <property type="term" value="P:positive regulation of translation"/>
    <property type="evidence" value="ECO:0007669"/>
    <property type="project" value="Ensembl"/>
</dbReference>
<dbReference type="GO" id="GO:1905091">
    <property type="term" value="P:positive regulation of type 2 mitophagy"/>
    <property type="evidence" value="ECO:0000315"/>
    <property type="project" value="ParkinsonsUK-UCL"/>
</dbReference>
<dbReference type="GO" id="GO:0051443">
    <property type="term" value="P:positive regulation of ubiquitin-protein transferase activity"/>
    <property type="evidence" value="ECO:0000304"/>
    <property type="project" value="ParkinsonsUK-UCL"/>
</dbReference>
<dbReference type="GO" id="GO:0006468">
    <property type="term" value="P:protein phosphorylation"/>
    <property type="evidence" value="ECO:0000314"/>
    <property type="project" value="UniProtKB"/>
</dbReference>
<dbReference type="GO" id="GO:0050821">
    <property type="term" value="P:protein stabilization"/>
    <property type="evidence" value="ECO:0000315"/>
    <property type="project" value="UniProtKB"/>
</dbReference>
<dbReference type="GO" id="GO:0016567">
    <property type="term" value="P:protein ubiquitination"/>
    <property type="evidence" value="ECO:0000315"/>
    <property type="project" value="UniProtKB"/>
</dbReference>
<dbReference type="GO" id="GO:0042981">
    <property type="term" value="P:regulation of apoptotic process"/>
    <property type="evidence" value="ECO:0000318"/>
    <property type="project" value="GO_Central"/>
</dbReference>
<dbReference type="GO" id="GO:1903146">
    <property type="term" value="P:regulation of autophagy of mitochondrion"/>
    <property type="evidence" value="ECO:0000304"/>
    <property type="project" value="ParkinsonsUK-UCL"/>
</dbReference>
<dbReference type="GO" id="GO:1900407">
    <property type="term" value="P:regulation of cellular response to oxidative stress"/>
    <property type="evidence" value="ECO:0000315"/>
    <property type="project" value="ParkinsonsUK-UCL"/>
</dbReference>
<dbReference type="GO" id="GO:0010310">
    <property type="term" value="P:regulation of hydrogen peroxide metabolic process"/>
    <property type="evidence" value="ECO:0007669"/>
    <property type="project" value="Ensembl"/>
</dbReference>
<dbReference type="GO" id="GO:0051881">
    <property type="term" value="P:regulation of mitochondrial membrane potential"/>
    <property type="evidence" value="ECO:0000315"/>
    <property type="project" value="ParkinsonsUK-UCL"/>
</dbReference>
<dbReference type="GO" id="GO:0010821">
    <property type="term" value="P:regulation of mitochondrion organization"/>
    <property type="evidence" value="ECO:0000315"/>
    <property type="project" value="ParkinsonsUK-UCL"/>
</dbReference>
<dbReference type="GO" id="GO:0002082">
    <property type="term" value="P:regulation of oxidative phosphorylation"/>
    <property type="evidence" value="ECO:0000314"/>
    <property type="project" value="ParkinsonsUK-UCL"/>
</dbReference>
<dbReference type="GO" id="GO:0061136">
    <property type="term" value="P:regulation of proteasomal protein catabolic process"/>
    <property type="evidence" value="ECO:0000303"/>
    <property type="project" value="ParkinsonsUK-UCL"/>
</dbReference>
<dbReference type="GO" id="GO:1903214">
    <property type="term" value="P:regulation of protein targeting to mitochondrion"/>
    <property type="evidence" value="ECO:0000315"/>
    <property type="project" value="ParkinsonsUK-UCL"/>
</dbReference>
<dbReference type="GO" id="GO:0031396">
    <property type="term" value="P:regulation of protein ubiquitination"/>
    <property type="evidence" value="ECO:0000314"/>
    <property type="project" value="BHF-UCL"/>
</dbReference>
<dbReference type="GO" id="GO:0043254">
    <property type="term" value="P:regulation of protein-containing complex assembly"/>
    <property type="evidence" value="ECO:0000314"/>
    <property type="project" value="BHF-UCL"/>
</dbReference>
<dbReference type="GO" id="GO:2000377">
    <property type="term" value="P:regulation of reactive oxygen species metabolic process"/>
    <property type="evidence" value="ECO:0000315"/>
    <property type="project" value="ParkinsonsUK-UCL"/>
</dbReference>
<dbReference type="GO" id="GO:1902803">
    <property type="term" value="P:regulation of synaptic vesicle transport"/>
    <property type="evidence" value="ECO:0000304"/>
    <property type="project" value="ParkinsonsUK-UCL"/>
</dbReference>
<dbReference type="GO" id="GO:0022904">
    <property type="term" value="P:respiratory electron transport chain"/>
    <property type="evidence" value="ECO:0007669"/>
    <property type="project" value="Ensembl"/>
</dbReference>
<dbReference type="GO" id="GO:0002931">
    <property type="term" value="P:response to ischemia"/>
    <property type="evidence" value="ECO:0007669"/>
    <property type="project" value="Ensembl"/>
</dbReference>
<dbReference type="GO" id="GO:0006979">
    <property type="term" value="P:response to oxidative stress"/>
    <property type="evidence" value="ECO:0000316"/>
    <property type="project" value="ParkinsonsUK-UCL"/>
</dbReference>
<dbReference type="GO" id="GO:0038203">
    <property type="term" value="P:TORC2 signaling"/>
    <property type="evidence" value="ECO:0000314"/>
    <property type="project" value="ParkinsonsUK-UCL"/>
</dbReference>
<dbReference type="GO" id="GO:0006511">
    <property type="term" value="P:ubiquitin-dependent protein catabolic process"/>
    <property type="evidence" value="ECO:0000304"/>
    <property type="project" value="ParkinsonsUK-UCL"/>
</dbReference>
<dbReference type="CDD" id="cd14018">
    <property type="entry name" value="STKc_PINK1"/>
    <property type="match status" value="1"/>
</dbReference>
<dbReference type="FunFam" id="1.10.510.10:FF:000418">
    <property type="entry name" value="PTEN induced kinase 1"/>
    <property type="match status" value="1"/>
</dbReference>
<dbReference type="Gene3D" id="1.10.510.10">
    <property type="entry name" value="Transferase(Phosphotransferase) domain 1"/>
    <property type="match status" value="1"/>
</dbReference>
<dbReference type="InterPro" id="IPR011009">
    <property type="entry name" value="Kinase-like_dom_sf"/>
</dbReference>
<dbReference type="InterPro" id="IPR051511">
    <property type="entry name" value="MitoQC_Scaffold_Kinases"/>
</dbReference>
<dbReference type="InterPro" id="IPR040110">
    <property type="entry name" value="PINK1_STKc"/>
</dbReference>
<dbReference type="InterPro" id="IPR000719">
    <property type="entry name" value="Prot_kinase_dom"/>
</dbReference>
<dbReference type="InterPro" id="IPR008271">
    <property type="entry name" value="Ser/Thr_kinase_AS"/>
</dbReference>
<dbReference type="PANTHER" id="PTHR22972">
    <property type="entry name" value="SERINE/THREONINE PROTEIN KINASE"/>
    <property type="match status" value="1"/>
</dbReference>
<dbReference type="PANTHER" id="PTHR22972:SF7">
    <property type="entry name" value="SERINE_THREONINE-PROTEIN KINASE PINK1, MITOCHONDRIAL"/>
    <property type="match status" value="1"/>
</dbReference>
<dbReference type="Pfam" id="PF00069">
    <property type="entry name" value="Pkinase"/>
    <property type="match status" value="1"/>
</dbReference>
<dbReference type="SMART" id="SM00220">
    <property type="entry name" value="S_TKc"/>
    <property type="match status" value="1"/>
</dbReference>
<dbReference type="SUPFAM" id="SSF56112">
    <property type="entry name" value="Protein kinase-like (PK-like)"/>
    <property type="match status" value="1"/>
</dbReference>
<dbReference type="PROSITE" id="PS50011">
    <property type="entry name" value="PROTEIN_KINASE_DOM"/>
    <property type="match status" value="1"/>
</dbReference>
<dbReference type="PROSITE" id="PS00108">
    <property type="entry name" value="PROTEIN_KINASE_ST"/>
    <property type="match status" value="1"/>
</dbReference>
<organism evidence="70">
    <name type="scientific">Homo sapiens</name>
    <name type="common">Human</name>
    <dbReference type="NCBI Taxonomy" id="9606"/>
    <lineage>
        <taxon>Eukaryota</taxon>
        <taxon>Metazoa</taxon>
        <taxon>Chordata</taxon>
        <taxon>Craniata</taxon>
        <taxon>Vertebrata</taxon>
        <taxon>Euteleostomi</taxon>
        <taxon>Mammalia</taxon>
        <taxon>Eutheria</taxon>
        <taxon>Euarchontoglires</taxon>
        <taxon>Primates</taxon>
        <taxon>Haplorrhini</taxon>
        <taxon>Catarrhini</taxon>
        <taxon>Hominidae</taxon>
        <taxon>Homo</taxon>
    </lineage>
</organism>
<protein>
    <recommendedName>
        <fullName>Serine/threonine-protein kinase PINK1, mitochondrial</fullName>
        <ecNumber evidence="34 50 51 52 61">2.7.11.1</ecNumber>
    </recommendedName>
    <alternativeName>
        <fullName>BRPK</fullName>
    </alternativeName>
    <alternativeName>
        <fullName>PTEN-induced putative kinase protein 1</fullName>
    </alternativeName>
</protein>